<protein>
    <recommendedName>
        <fullName>Genome polyprotein</fullName>
    </recommendedName>
    <component>
        <recommendedName>
            <fullName>P1</fullName>
        </recommendedName>
    </component>
    <component>
        <recommendedName>
            <fullName>Capsid protein VP0</fullName>
        </recommendedName>
        <alternativeName>
            <fullName>VP4-VP2</fullName>
        </alternativeName>
    </component>
    <component>
        <recommendedName>
            <fullName>Capsid protein VP4</fullName>
        </recommendedName>
        <alternativeName>
            <fullName>P1A</fullName>
        </alternativeName>
        <alternativeName>
            <fullName>Virion protein 4</fullName>
        </alternativeName>
    </component>
    <component>
        <recommendedName>
            <fullName>Capsid protein VP2</fullName>
        </recommendedName>
        <alternativeName>
            <fullName>P1B</fullName>
        </alternativeName>
        <alternativeName>
            <fullName>Virion protein 2</fullName>
        </alternativeName>
    </component>
    <component>
        <recommendedName>
            <fullName>Capsid protein VP3</fullName>
        </recommendedName>
        <alternativeName>
            <fullName>P1C</fullName>
        </alternativeName>
        <alternativeName>
            <fullName>Virion protein 3</fullName>
        </alternativeName>
    </component>
    <component>
        <recommendedName>
            <fullName>Capsid protein VP1</fullName>
        </recommendedName>
        <alternativeName>
            <fullName>P1D</fullName>
        </alternativeName>
        <alternativeName>
            <fullName>Virion protein 1</fullName>
        </alternativeName>
    </component>
    <component>
        <recommendedName>
            <fullName>P2</fullName>
        </recommendedName>
    </component>
    <component>
        <recommendedName>
            <fullName>Protease 2A</fullName>
            <shortName>P2A</shortName>
            <ecNumber evidence="2">3.4.22.29</ecNumber>
        </recommendedName>
        <alternativeName>
            <fullName>Picornain 2A</fullName>
        </alternativeName>
        <alternativeName>
            <fullName>Protein 2A</fullName>
        </alternativeName>
    </component>
    <component>
        <recommendedName>
            <fullName>Protein 2B</fullName>
            <shortName>P2B</shortName>
        </recommendedName>
    </component>
    <component>
        <recommendedName>
            <fullName>Protein 2C</fullName>
            <shortName>P2C</shortName>
            <ecNumber evidence="2">3.6.1.15</ecNumber>
        </recommendedName>
    </component>
    <component>
        <recommendedName>
            <fullName>P3</fullName>
        </recommendedName>
    </component>
    <component>
        <recommendedName>
            <fullName>Protein 3AB</fullName>
        </recommendedName>
    </component>
    <component>
        <recommendedName>
            <fullName>Protein 3A</fullName>
            <shortName>P3A</shortName>
        </recommendedName>
    </component>
    <component>
        <recommendedName>
            <fullName>Viral protein genome-linked</fullName>
            <shortName>VPg</shortName>
        </recommendedName>
        <alternativeName>
            <fullName>Protein 3B</fullName>
            <shortName>P3B</shortName>
        </alternativeName>
    </component>
    <component>
        <recommendedName>
            <fullName>Protein 3CD</fullName>
            <ecNumber>3.4.22.28</ecNumber>
        </recommendedName>
    </component>
    <component>
        <recommendedName>
            <fullName evidence="12">Protease 3C</fullName>
            <ecNumber evidence="12">3.4.22.28</ecNumber>
        </recommendedName>
        <alternativeName>
            <fullName evidence="12">Picornain 3C</fullName>
            <shortName evidence="12">P3C</shortName>
        </alternativeName>
    </component>
    <component>
        <recommendedName>
            <fullName evidence="10">RNA-directed RNA polymerase</fullName>
            <shortName>RdRp</shortName>
            <ecNumber evidence="10">2.7.7.48</ecNumber>
        </recommendedName>
        <alternativeName>
            <fullName>3D polymerase</fullName>
            <shortName>3Dpol</shortName>
        </alternativeName>
        <alternativeName>
            <fullName>Protein 3D</fullName>
            <shortName>3D</shortName>
        </alternativeName>
    </component>
</protein>
<proteinExistence type="evidence at protein level"/>
<accession>Q68T42</accession>
<keyword id="KW-0002">3D-structure</keyword>
<keyword id="KW-1072">Activation of host autophagy by virus</keyword>
<keyword id="KW-0067">ATP-binding</keyword>
<keyword id="KW-0068">Autocatalytic cleavage</keyword>
<keyword id="KW-0167">Capsid protein</keyword>
<keyword id="KW-0191">Covalent protein-RNA linkage</keyword>
<keyword id="KW-1262">Eukaryotic host gene expression shutoff by virus</keyword>
<keyword id="KW-1193">Eukaryotic host translation shutoff by virus</keyword>
<keyword id="KW-0347">Helicase</keyword>
<keyword id="KW-1035">Host cytoplasm</keyword>
<keyword id="KW-1036">Host cytoplasmic vesicle</keyword>
<keyword id="KW-1190">Host gene expression shutoff by virus</keyword>
<keyword id="KW-1043">Host membrane</keyword>
<keyword id="KW-1192">Host mRNA suppression by virus</keyword>
<keyword id="KW-1048">Host nucleus</keyword>
<keyword id="KW-0945">Host-virus interaction</keyword>
<keyword id="KW-0378">Hydrolase</keyword>
<keyword id="KW-1090">Inhibition of host innate immune response by virus</keyword>
<keyword id="KW-1089">Inhibition of host MDA5 by virus</keyword>
<keyword id="KW-1099">Inhibition of host mRNA nuclear export by virus</keyword>
<keyword id="KW-1100">Inhibition of host NF-kappa-B by virus</keyword>
<keyword id="KW-1113">Inhibition of host RLR pathway by virus</keyword>
<keyword id="KW-1225">Inhibition of host TLR pathway by virus</keyword>
<keyword id="KW-0407">Ion channel</keyword>
<keyword id="KW-0406">Ion transport</keyword>
<keyword id="KW-0449">Lipoprotein</keyword>
<keyword id="KW-0460">Magnesium</keyword>
<keyword id="KW-0472">Membrane</keyword>
<keyword id="KW-0479">Metal-binding</keyword>
<keyword id="KW-0519">Myristate</keyword>
<keyword id="KW-0547">Nucleotide-binding</keyword>
<keyword id="KW-0548">Nucleotidyltransferase</keyword>
<keyword id="KW-0597">Phosphoprotein</keyword>
<keyword id="KW-1172">Pore-mediated penetration of viral genome into host cell</keyword>
<keyword id="KW-0645">Protease</keyword>
<keyword id="KW-0677">Repeat</keyword>
<keyword id="KW-0694">RNA-binding</keyword>
<keyword id="KW-0696">RNA-directed RNA polymerase</keyword>
<keyword id="KW-1143">T=pseudo3 icosahedral capsid protein</keyword>
<keyword id="KW-0788">Thiol protease</keyword>
<keyword id="KW-0808">Transferase</keyword>
<keyword id="KW-0813">Transport</keyword>
<keyword id="KW-1161">Viral attachment to host cell</keyword>
<keyword id="KW-0899">Viral immunoevasion</keyword>
<keyword id="KW-1182">Viral ion channel</keyword>
<keyword id="KW-1162">Viral penetration into host cytoplasm</keyword>
<keyword id="KW-0693">Viral RNA replication</keyword>
<keyword id="KW-0946">Virion</keyword>
<keyword id="KW-1164">Virus endocytosis by host</keyword>
<keyword id="KW-1160">Virus entry into host cell</keyword>
<keyword id="KW-0862">Zinc</keyword>
<keyword id="KW-0863">Zinc-finger</keyword>
<reference key="1">
    <citation type="journal article" date="2004" name="J. Gen. Virol.">
        <title>Enterovirus 68 is associated with respiratory illness and shares biological features with both the enteroviruses and the rhinoviruses.</title>
        <authorList>
            <person name="Oberste M.S."/>
            <person name="Maher K."/>
            <person name="Schnurr D."/>
            <person name="Flemister M.R."/>
            <person name="Lovchik J.C."/>
            <person name="Peters H."/>
            <person name="Sessions W."/>
            <person name="Kirk C."/>
            <person name="Chatterjee N."/>
            <person name="Fuller S."/>
            <person name="Hanauer J.M."/>
            <person name="Pallansch M.A."/>
        </authorList>
    </citation>
    <scope>NUCLEOTIDE SEQUENCE [LARGE SCALE GENOMIC DNA]</scope>
    <source>
        <strain>Fermon</strain>
    </source>
</reference>
<reference key="2">
    <citation type="journal article" date="2014" name="J. Virol.">
        <title>Enterovirus 68 3C protease cleaves TRIF to attenuate antiviral responses mediated by Toll-like receptor 3.</title>
        <authorList>
            <person name="Xiang Z."/>
            <person name="Li L."/>
            <person name="Lei X."/>
            <person name="Zhou H."/>
            <person name="Zhou Z."/>
            <person name="He B."/>
            <person name="Wang J."/>
        </authorList>
    </citation>
    <scope>FUNCTION (PROTEASE 3C)</scope>
    <source>
        <strain>Beijing</strain>
    </source>
</reference>
<reference key="3">
    <citation type="journal article" date="2016" name="J. Virol.">
        <title>3C Protease of Enterovirus D68 Inhibits Cellular Defense Mediated by Interferon Regulatory Factor 7.</title>
        <authorList>
            <person name="Xiang Z."/>
            <person name="Liu L."/>
            <person name="Lei X."/>
            <person name="Zhou Z."/>
            <person name="He B."/>
            <person name="Wang J."/>
        </authorList>
    </citation>
    <scope>FUNCTION (PROTEASE 3C)</scope>
</reference>
<reference key="4">
    <citation type="journal article" date="2017" name="J. Virol.">
        <title>Disruption of MDA5-Mediated Innate Immune Responses by the 3C Proteins of Coxsackievirus A16, Coxsackievirus A6, and Enterovirus D68.</title>
        <authorList>
            <person name="Rui Y."/>
            <person name="Su J."/>
            <person name="Wang H."/>
            <person name="Chang J."/>
            <person name="Wang S."/>
            <person name="Zheng W."/>
            <person name="Cai Y."/>
            <person name="Wei W."/>
            <person name="Gordy J.T."/>
            <person name="Markham R."/>
            <person name="Kong W."/>
            <person name="Zhang W."/>
            <person name="Yu X.F."/>
        </authorList>
    </citation>
    <scope>INTERACTION WITH HOST IFIH1 (PROTEASE 3C)</scope>
    <scope>FUNCTION (PROTEASE 3C)</scope>
    <source>
        <strain>Fermon</strain>
    </source>
</reference>
<reference key="5">
    <citation type="journal article" date="2019" name="J. Virol.">
        <title>Essential Role of Enterovirus 2A Protease in Counteracting Stress Granule Formation and the Induction of Type I Interferon.</title>
        <authorList>
            <person name="Visser L.J."/>
            <person name="Langereis M.A."/>
            <person name="Rabouw H.H."/>
            <person name="Wahedi M."/>
            <person name="Muntjewerff E.M."/>
            <person name="de Groot R.J."/>
            <person name="van Kuppeveld F.J.M."/>
        </authorList>
    </citation>
    <scope>FUNCTION (PROTEASE 2A)</scope>
</reference>
<reference key="6">
    <citation type="journal article" date="2021" name="J. Virol.">
        <title>Enterovirus D68 Protease 2Apro Targets TRAF3 To Subvert Host Innate Immune Responses.</title>
        <authorList>
            <person name="Kang J."/>
            <person name="Pang Z."/>
            <person name="Zhou Z."/>
            <person name="Li X."/>
            <person name="Liu S."/>
            <person name="Cheng J."/>
            <person name="Liu P."/>
            <person name="Tan W."/>
            <person name="Wang Z."/>
            <person name="Wang T."/>
        </authorList>
    </citation>
    <scope>FUNCTION (PROTEASE 2A)</scope>
    <scope>MUTAGENESIS OF CYS-968</scope>
</reference>
<reference key="7">
    <citation type="journal article" date="2021" name="Elife">
        <title>Diverse viral proteases activate the NLRP1 inflammasome.</title>
        <authorList>
            <person name="Tsu B.V."/>
            <person name="Beierschmitt C."/>
            <person name="Ryan A.P."/>
            <person name="Agarwal R."/>
            <person name="Mitchell P.S."/>
            <person name="Daugherty M.D."/>
        </authorList>
    </citation>
    <scope>FUNCTION (PROTEASE 3C)</scope>
</reference>
<reference key="8">
    <citation type="journal article" date="2023" name="Microbiol. Spectr.">
        <title>Enterovirus D68 VP3 Targets the Interferon Regulatory Factor 7 To Inhibit Type I Interferon Response.</title>
        <authorList>
            <person name="Kang J."/>
            <person name="Huang M."/>
            <person name="Li J."/>
            <person name="Zhang K."/>
            <person name="Zhu C."/>
            <person name="Liu S."/>
            <person name="Zhou Z."/>
            <person name="Wang T."/>
            <person name="Wang Z."/>
        </authorList>
    </citation>
    <scope>FUNCTION (CAPSID PROTEIN VP3)</scope>
    <scope>INTERACTION WITH HOST IRF7 (CAPSID PROTEIN VP3)</scope>
</reference>
<reference evidence="25 26 27" key="9">
    <citation type="journal article" date="2015" name="Nat. Commun.">
        <title>Sialic acid-dependent cell entry of human enterovirus D68.</title>
        <authorList>
            <person name="Liu Y."/>
            <person name="Sheng J."/>
            <person name="Baggen J."/>
            <person name="Meng G."/>
            <person name="Xiao C."/>
            <person name="Thibaut H.J."/>
            <person name="van Kuppeveld F.J."/>
            <person name="Rossmann M.G."/>
        </authorList>
    </citation>
    <scope>X-RAY CRYSTALLOGRAPHY (2.15 ANGSTROMS) OF 565-861; 70-317; 318-564 AND 2-69</scope>
    <scope>FUNCTION (CAPSID PROTEIN VP1)</scope>
    <scope>FUNCTION (CAPSID PROTEIN VP3)</scope>
</reference>
<reference evidence="23 24" key="10">
    <citation type="journal article" date="2015" name="Science">
        <title>Structure and inhibition of EV-D68, a virus that causes respiratory illness in children.</title>
        <authorList>
            <person name="Liu Y."/>
            <person name="Sheng J."/>
            <person name="Fokine A."/>
            <person name="Meng G."/>
            <person name="Shin W.H."/>
            <person name="Long F."/>
            <person name="Kuhn R.J."/>
            <person name="Kihara D."/>
            <person name="Rossmann M.G."/>
        </authorList>
    </citation>
    <scope>X-RAY CRYSTALLOGRAPHY (2.00 ANGSTROMS) OF 70-317 AND 318-564 IN COMPLEX WITH PLECONARIL</scope>
</reference>
<reference evidence="28" key="11">
    <citation type="journal article" date="2019" name="PLoS Pathog.">
        <title>Convergent evolution in the mechanisms of ACBD3 recruitment to picornavirus replication sites.</title>
        <authorList>
            <person name="Horova V."/>
            <person name="Lyoo H."/>
            <person name="Rozycki B."/>
            <person name="Chalupska D."/>
            <person name="Smola M."/>
            <person name="Humpolickova J."/>
            <person name="Strating J.R.P.M."/>
            <person name="van Kuppeveld F.J.M."/>
            <person name="Boura E."/>
            <person name="Klima M."/>
        </authorList>
    </citation>
    <scope>X-RAY CRYSTALLOGRAPHY (2.10 ANGSTROMS) OF 1438-1497</scope>
    <scope>INTERACTION WITH HOST ACBD3 (PROTEIN 3A)</scope>
    <scope>SUBUNIT</scope>
    <scope>MUTAGENESIS OF 1460-ASN--ASP-1462; 1469-GLN--ASP-1473; 1481-ILE--HIS-1484 AND 1489-LEU--LYS-1493</scope>
    <scope>FUNCTION (PROTEIN 3A)</scope>
</reference>
<evidence type="ECO:0000250" key="1">
    <source>
        <dbReference type="UniProtKB" id="B9VUU3"/>
    </source>
</evidence>
<evidence type="ECO:0000250" key="2">
    <source>
        <dbReference type="UniProtKB" id="P03300"/>
    </source>
</evidence>
<evidence type="ECO:0000250" key="3">
    <source>
        <dbReference type="UniProtKB" id="P03301"/>
    </source>
</evidence>
<evidence type="ECO:0000250" key="4">
    <source>
        <dbReference type="UniProtKB" id="P03303"/>
    </source>
</evidence>
<evidence type="ECO:0000250" key="5">
    <source>
        <dbReference type="UniProtKB" id="P03313"/>
    </source>
</evidence>
<evidence type="ECO:0000250" key="6">
    <source>
        <dbReference type="UniProtKB" id="P04936"/>
    </source>
</evidence>
<evidence type="ECO:0000250" key="7">
    <source>
        <dbReference type="UniProtKB" id="Q66478"/>
    </source>
</evidence>
<evidence type="ECO:0000250" key="8">
    <source>
        <dbReference type="UniProtKB" id="Q9QF31"/>
    </source>
</evidence>
<evidence type="ECO:0000255" key="9"/>
<evidence type="ECO:0000255" key="10">
    <source>
        <dbReference type="PROSITE-ProRule" id="PRU00539"/>
    </source>
</evidence>
<evidence type="ECO:0000255" key="11">
    <source>
        <dbReference type="PROSITE-ProRule" id="PRU00551"/>
    </source>
</evidence>
<evidence type="ECO:0000255" key="12">
    <source>
        <dbReference type="PROSITE-ProRule" id="PRU01222"/>
    </source>
</evidence>
<evidence type="ECO:0000269" key="13">
    <source>
    </source>
</evidence>
<evidence type="ECO:0000269" key="14">
    <source>
    </source>
</evidence>
<evidence type="ECO:0000269" key="15">
    <source>
    </source>
</evidence>
<evidence type="ECO:0000269" key="16">
    <source>
    </source>
</evidence>
<evidence type="ECO:0000269" key="17">
    <source>
    </source>
</evidence>
<evidence type="ECO:0000269" key="18">
    <source>
    </source>
</evidence>
<evidence type="ECO:0000269" key="19">
    <source>
    </source>
</evidence>
<evidence type="ECO:0000269" key="20">
    <source>
    </source>
</evidence>
<evidence type="ECO:0000269" key="21">
    <source>
    </source>
</evidence>
<evidence type="ECO:0000305" key="22"/>
<evidence type="ECO:0007744" key="23">
    <source>
        <dbReference type="PDB" id="4WM7"/>
    </source>
</evidence>
<evidence type="ECO:0007744" key="24">
    <source>
        <dbReference type="PDB" id="4WM8"/>
    </source>
</evidence>
<evidence type="ECO:0007744" key="25">
    <source>
        <dbReference type="PDB" id="5BNN"/>
    </source>
</evidence>
<evidence type="ECO:0007744" key="26">
    <source>
        <dbReference type="PDB" id="5BNO"/>
    </source>
</evidence>
<evidence type="ECO:0007744" key="27">
    <source>
        <dbReference type="PDB" id="5BNP"/>
    </source>
</evidence>
<evidence type="ECO:0007744" key="28">
    <source>
        <dbReference type="PDB" id="6HLN"/>
    </source>
</evidence>
<evidence type="ECO:0007829" key="29">
    <source>
        <dbReference type="PDB" id="4WM8"/>
    </source>
</evidence>
<evidence type="ECO:0007829" key="30">
    <source>
        <dbReference type="PDB" id="5BNO"/>
    </source>
</evidence>
<evidence type="ECO:0007829" key="31">
    <source>
        <dbReference type="PDB" id="5BNP"/>
    </source>
</evidence>
<evidence type="ECO:0007829" key="32">
    <source>
        <dbReference type="PDB" id="6HLN"/>
    </source>
</evidence>
<evidence type="ECO:0007829" key="33">
    <source>
        <dbReference type="PDB" id="7GPX"/>
    </source>
</evidence>
<evidence type="ECO:0007829" key="34">
    <source>
        <dbReference type="PDB" id="7GQ4"/>
    </source>
</evidence>
<evidence type="ECO:0007829" key="35">
    <source>
        <dbReference type="PDB" id="7JRE"/>
    </source>
</evidence>
<feature type="initiator methionine" description="Removed; by host" evidence="2">
    <location>
        <position position="1"/>
    </location>
</feature>
<feature type="chain" id="PRO_0000449051" description="Genome polyprotein">
    <location>
        <begin position="2"/>
        <end position="2188"/>
    </location>
</feature>
<feature type="chain" id="PRO_0000449052" description="P1">
    <location>
        <begin position="2"/>
        <end position="861"/>
    </location>
</feature>
<feature type="chain" id="PRO_0000449053" description="Capsid protein VP0">
    <location>
        <begin position="2"/>
        <end position="317"/>
    </location>
</feature>
<feature type="chain" id="PRO_0000449054" description="Capsid protein VP4">
    <location>
        <begin position="2"/>
        <end position="69"/>
    </location>
</feature>
<feature type="chain" id="PRO_0000449055" description="Capsid protein VP2">
    <location>
        <begin position="70"/>
        <end position="317"/>
    </location>
</feature>
<feature type="chain" id="PRO_0000449056" description="Capsid protein VP3">
    <location>
        <begin position="318"/>
        <end position="552"/>
    </location>
</feature>
<feature type="chain" id="PRO_0000449057" description="Capsid protein VP1">
    <location>
        <begin position="553"/>
        <end position="861"/>
    </location>
</feature>
<feature type="chain" id="PRO_0000449058" description="P2">
    <location>
        <begin position="862"/>
        <end position="1437"/>
    </location>
</feature>
<feature type="chain" id="PRO_0000449059" description="Protease 2A">
    <location>
        <begin position="862"/>
        <end position="1008"/>
    </location>
</feature>
<feature type="chain" id="PRO_0000449060" description="Protein 2B">
    <location>
        <begin position="1009"/>
        <end position="1107"/>
    </location>
</feature>
<feature type="chain" id="PRO_0000449061" description="Protein 2C">
    <location>
        <begin position="1108"/>
        <end position="1437"/>
    </location>
</feature>
<feature type="chain" id="PRO_0000449062" description="P3">
    <location>
        <begin position="1438"/>
        <end position="2188"/>
    </location>
</feature>
<feature type="chain" id="PRO_0000449063" description="Protein 3AB">
    <location>
        <begin position="1438"/>
        <end position="1548"/>
    </location>
</feature>
<feature type="chain" id="PRO_0000449064" description="Protein 3A">
    <location>
        <begin position="1438"/>
        <end position="1526"/>
    </location>
</feature>
<feature type="chain" id="PRO_0000449065" description="Viral protein genome-linked">
    <location>
        <begin position="1527"/>
        <end position="1548"/>
    </location>
</feature>
<feature type="chain" id="PRO_0000449066" description="Protein 3CD">
    <location>
        <begin position="1549"/>
        <end position="2188"/>
    </location>
</feature>
<feature type="chain" id="PRO_0000449067" description="Protease 3C">
    <location>
        <begin position="1549"/>
        <end position="1731"/>
    </location>
</feature>
<feature type="chain" id="PRO_0000449068" description="RNA-directed RNA polymerase">
    <location>
        <begin position="1732"/>
        <end position="2188"/>
    </location>
</feature>
<feature type="topological domain" description="Cytoplasmic" evidence="9">
    <location>
        <begin position="2"/>
        <end position="1503"/>
    </location>
</feature>
<feature type="intramembrane region" evidence="9">
    <location>
        <begin position="1504"/>
        <end position="1519"/>
    </location>
</feature>
<feature type="topological domain" description="Cytoplasmic" evidence="9">
    <location>
        <begin position="1520"/>
        <end position="2188"/>
    </location>
</feature>
<feature type="domain" description="SF3 helicase" evidence="11">
    <location>
        <begin position="1212"/>
        <end position="1370"/>
    </location>
</feature>
<feature type="domain" description="Peptidase C3" evidence="12">
    <location>
        <begin position="1549"/>
        <end position="1727"/>
    </location>
</feature>
<feature type="domain" description="RdRp catalytic" evidence="10">
    <location>
        <begin position="1954"/>
        <end position="2069"/>
    </location>
</feature>
<feature type="zinc finger region" description="C4-type; degenerate" evidence="1">
    <location>
        <begin position="1376"/>
        <end position="1394"/>
    </location>
</feature>
<feature type="region of interest" description="Oligomerization" evidence="2">
    <location>
        <begin position="1108"/>
        <end position="1246"/>
    </location>
</feature>
<feature type="region of interest" description="Membrane-binding" evidence="2">
    <location>
        <begin position="1108"/>
        <end position="1180"/>
    </location>
</feature>
<feature type="region of interest" description="RNA-binding" evidence="2">
    <location>
        <begin position="1129"/>
        <end position="1133"/>
    </location>
</feature>
<feature type="region of interest" description="RNA-binding" evidence="2">
    <location>
        <begin position="1421"/>
        <end position="1428"/>
    </location>
</feature>
<feature type="region of interest" description="Oligomerization" evidence="2">
    <location>
        <begin position="1432"/>
        <end position="1437"/>
    </location>
</feature>
<feature type="active site" description="For protease 2A activity" evidence="2">
    <location>
        <position position="879"/>
    </location>
</feature>
<feature type="active site" description="For protease 2A activity" evidence="2">
    <location>
        <position position="897"/>
    </location>
</feature>
<feature type="active site" description="For protease 2A activity" evidence="2">
    <location>
        <position position="968"/>
    </location>
</feature>
<feature type="active site" description="For protease 3C activity" evidence="12">
    <location>
        <position position="1588"/>
    </location>
</feature>
<feature type="active site" description="For protease 3C activity" evidence="12">
    <location>
        <position position="1619"/>
    </location>
</feature>
<feature type="active site" description="For protease 3C activity" evidence="12">
    <location>
        <position position="1695"/>
    </location>
</feature>
<feature type="binding site" evidence="14">
    <location>
        <position position="408"/>
    </location>
    <ligand>
        <name>N-acetylneuraminate</name>
        <dbReference type="ChEBI" id="CHEBI:35418"/>
    </ligand>
</feature>
<feature type="binding site" evidence="14">
    <location>
        <position position="412"/>
    </location>
    <ligand>
        <name>N-acetylneuraminate</name>
        <dbReference type="ChEBI" id="CHEBI:35418"/>
    </ligand>
</feature>
<feature type="binding site" evidence="14">
    <location>
        <position position="548"/>
    </location>
    <ligand>
        <name>N-acetylneuraminate</name>
        <dbReference type="ChEBI" id="CHEBI:35418"/>
    </ligand>
</feature>
<feature type="binding site" evidence="14">
    <location>
        <position position="549"/>
    </location>
    <ligand>
        <name>N-acetylneuraminate</name>
        <dbReference type="ChEBI" id="CHEBI:35418"/>
    </ligand>
</feature>
<feature type="binding site" evidence="14">
    <location>
        <position position="550"/>
    </location>
    <ligand>
        <name>N-acetylneuraminate</name>
        <dbReference type="ChEBI" id="CHEBI:35418"/>
    </ligand>
</feature>
<feature type="binding site" evidence="14">
    <location>
        <position position="834"/>
    </location>
    <ligand>
        <name>N-acetylneuraminate</name>
        <dbReference type="ChEBI" id="CHEBI:35418"/>
    </ligand>
</feature>
<feature type="binding site" evidence="14">
    <location>
        <position position="838"/>
    </location>
    <ligand>
        <name>N-acetylneuraminate</name>
        <dbReference type="ChEBI" id="CHEBI:35418"/>
    </ligand>
</feature>
<feature type="binding site" evidence="14">
    <location>
        <position position="839"/>
    </location>
    <ligand>
        <name>N-acetylneuraminate</name>
        <dbReference type="ChEBI" id="CHEBI:35418"/>
    </ligand>
</feature>
<feature type="binding site" evidence="8">
    <location>
        <position position="914"/>
    </location>
    <ligand>
        <name>Zn(2+)</name>
        <dbReference type="ChEBI" id="CHEBI:29105"/>
        <label>1</label>
        <note>structural</note>
    </ligand>
</feature>
<feature type="binding site" evidence="8">
    <location>
        <position position="916"/>
    </location>
    <ligand>
        <name>Zn(2+)</name>
        <dbReference type="ChEBI" id="CHEBI:29105"/>
        <label>1</label>
        <note>structural</note>
    </ligand>
</feature>
<feature type="binding site" evidence="8">
    <location>
        <position position="974"/>
    </location>
    <ligand>
        <name>Zn(2+)</name>
        <dbReference type="ChEBI" id="CHEBI:29105"/>
        <label>1</label>
        <note>structural</note>
    </ligand>
</feature>
<feature type="binding site" evidence="8">
    <location>
        <position position="976"/>
    </location>
    <ligand>
        <name>Zn(2+)</name>
        <dbReference type="ChEBI" id="CHEBI:29105"/>
        <label>1</label>
        <note>structural</note>
    </ligand>
</feature>
<feature type="binding site" evidence="11">
    <location>
        <begin position="1236"/>
        <end position="1243"/>
    </location>
    <ligand>
        <name>ATP</name>
        <dbReference type="ChEBI" id="CHEBI:30616"/>
    </ligand>
</feature>
<feature type="binding site" evidence="1">
    <location>
        <position position="1376"/>
    </location>
    <ligand>
        <name>Zn(2+)</name>
        <dbReference type="ChEBI" id="CHEBI:29105"/>
        <label>2</label>
    </ligand>
</feature>
<feature type="binding site" evidence="1">
    <location>
        <position position="1389"/>
    </location>
    <ligand>
        <name>Zn(2+)</name>
        <dbReference type="ChEBI" id="CHEBI:29105"/>
        <label>2</label>
    </ligand>
</feature>
<feature type="binding site" evidence="1">
    <location>
        <position position="1394"/>
    </location>
    <ligand>
        <name>Zn(2+)</name>
        <dbReference type="ChEBI" id="CHEBI:29105"/>
        <label>2</label>
    </ligand>
</feature>
<feature type="binding site" evidence="2">
    <location>
        <position position="1960"/>
    </location>
    <ligand>
        <name>Mg(2+)</name>
        <dbReference type="ChEBI" id="CHEBI:18420"/>
        <label>1</label>
        <note>catalytic; for RdRp activity</note>
    </ligand>
</feature>
<feature type="binding site" evidence="2">
    <location>
        <position position="1960"/>
    </location>
    <ligand>
        <name>Mg(2+)</name>
        <dbReference type="ChEBI" id="CHEBI:18420"/>
        <label>2</label>
        <note>catalytic; for RdRp activity</note>
    </ligand>
</feature>
<feature type="binding site" evidence="2">
    <location>
        <position position="2055"/>
    </location>
    <ligand>
        <name>Mg(2+)</name>
        <dbReference type="ChEBI" id="CHEBI:18420"/>
        <label>1</label>
        <note>catalytic; for RdRp activity</note>
    </ligand>
</feature>
<feature type="binding site" evidence="2">
    <location>
        <position position="2055"/>
    </location>
    <ligand>
        <name>Mg(2+)</name>
        <dbReference type="ChEBI" id="CHEBI:18420"/>
        <label>2</label>
        <note>catalytic; for RdRp activity</note>
    </ligand>
</feature>
<feature type="site" description="Cleavage; by autolysis" evidence="2">
    <location>
        <begin position="69"/>
        <end position="70"/>
    </location>
</feature>
<feature type="site" description="Cleavage; by protease 3C" evidence="3">
    <location>
        <begin position="317"/>
        <end position="318"/>
    </location>
</feature>
<feature type="site" description="Cleavage; by autolysis" evidence="3">
    <location>
        <begin position="861"/>
        <end position="862"/>
    </location>
</feature>
<feature type="site" description="Cleavage; by protease 3C" evidence="3">
    <location>
        <begin position="1008"/>
        <end position="1009"/>
    </location>
</feature>
<feature type="site" description="Cleavage; by protease 3C" evidence="3">
    <location>
        <begin position="1107"/>
        <end position="1108"/>
    </location>
</feature>
<feature type="site" description="Involved in the interaction with host RTN3" evidence="7">
    <location>
        <position position="1132"/>
    </location>
</feature>
<feature type="site" description="Cleavage; by protease 3C" evidence="3">
    <location>
        <begin position="1437"/>
        <end position="1438"/>
    </location>
</feature>
<feature type="site" description="Cleavage; by protease 3C" evidence="3">
    <location>
        <begin position="1526"/>
        <end position="1527"/>
    </location>
</feature>
<feature type="site" description="Cleavage; by protease 3C" evidence="3">
    <location>
        <begin position="1548"/>
        <end position="1549"/>
    </location>
</feature>
<feature type="site" description="Cleavage; by protease 3C" evidence="3">
    <location>
        <begin position="1731"/>
        <end position="1732"/>
    </location>
</feature>
<feature type="modified residue" description="O-(5'-phospho-RNA)-tyrosine" evidence="2">
    <location>
        <position position="1529"/>
    </location>
</feature>
<feature type="lipid moiety-binding region" description="N-myristoyl glycine; by host" evidence="2">
    <location>
        <position position="2"/>
    </location>
</feature>
<feature type="mutagenesis site" description="Loss of cleavage activity on host TRAF3." evidence="19">
    <original>C</original>
    <variation>A</variation>
    <location>
        <position position="968"/>
    </location>
</feature>
<feature type="mutagenesis site" description="Decreased recruitment of host PI4KB by the complex protein 3A-ACBD3." evidence="18">
    <original>NDL</original>
    <variation>AAA</variation>
    <location>
        <begin position="1460"/>
        <end position="1462"/>
    </location>
</feature>
<feature type="mutagenesis site" description="Decreased recruitment of host PI4KB by the complex protein 3A-ACBD3." evidence="18">
    <original>QEVRD</original>
    <variation>AEVAA</variation>
    <location>
        <begin position="1469"/>
        <end position="1473"/>
    </location>
</feature>
<feature type="mutagenesis site" description="Decreased recruitment of host PI4KB by the complex protein 3A-ACBD3." evidence="18">
    <original>IVIH</original>
    <variation>AAHA</variation>
    <location>
        <begin position="1481"/>
        <end position="1484"/>
    </location>
</feature>
<feature type="mutagenesis site" description="Decreased recruitment of host PI4KB by the complex protein 3A-ACBD3." evidence="18">
    <original>LVVEK</original>
    <variation>AVAEA</variation>
    <location>
        <begin position="1489"/>
        <end position="1493"/>
    </location>
</feature>
<feature type="strand" evidence="30">
    <location>
        <begin position="33"/>
        <end position="35"/>
    </location>
</feature>
<feature type="helix" evidence="30">
    <location>
        <begin position="36"/>
        <end position="38"/>
    </location>
</feature>
<feature type="helix" evidence="30">
    <location>
        <begin position="51"/>
        <end position="54"/>
    </location>
</feature>
<feature type="strand" evidence="30">
    <location>
        <begin position="57"/>
        <end position="59"/>
    </location>
</feature>
<feature type="strand" evidence="31">
    <location>
        <begin position="63"/>
        <end position="65"/>
    </location>
</feature>
<feature type="strand" evidence="29">
    <location>
        <begin position="83"/>
        <end position="87"/>
    </location>
</feature>
<feature type="strand" evidence="29">
    <location>
        <begin position="90"/>
        <end position="96"/>
    </location>
</feature>
<feature type="helix" evidence="29">
    <location>
        <begin position="103"/>
        <end position="105"/>
    </location>
</feature>
<feature type="turn" evidence="29">
    <location>
        <begin position="113"/>
        <end position="115"/>
    </location>
</feature>
<feature type="helix" evidence="29">
    <location>
        <begin position="126"/>
        <end position="128"/>
    </location>
</feature>
<feature type="strand" evidence="30">
    <location>
        <begin position="138"/>
        <end position="140"/>
    </location>
</feature>
<feature type="strand" evidence="29">
    <location>
        <begin position="147"/>
        <end position="151"/>
    </location>
</feature>
<feature type="helix" evidence="29">
    <location>
        <begin position="153"/>
        <end position="155"/>
    </location>
</feature>
<feature type="helix" evidence="29">
    <location>
        <begin position="159"/>
        <end position="167"/>
    </location>
</feature>
<feature type="strand" evidence="29">
    <location>
        <begin position="168"/>
        <end position="180"/>
    </location>
</feature>
<feature type="strand" evidence="29">
    <location>
        <begin position="188"/>
        <end position="197"/>
    </location>
</feature>
<feature type="strand" evidence="29">
    <location>
        <begin position="204"/>
        <end position="208"/>
    </location>
</feature>
<feature type="helix" evidence="29">
    <location>
        <begin position="212"/>
        <end position="215"/>
    </location>
</feature>
<feature type="helix" evidence="29">
    <location>
        <begin position="218"/>
        <end position="220"/>
    </location>
</feature>
<feature type="helix" evidence="29">
    <location>
        <begin position="227"/>
        <end position="229"/>
    </location>
</feature>
<feature type="turn" evidence="29">
    <location>
        <begin position="230"/>
        <end position="233"/>
    </location>
</feature>
<feature type="helix" evidence="29">
    <location>
        <begin position="239"/>
        <end position="241"/>
    </location>
</feature>
<feature type="strand" evidence="29">
    <location>
        <begin position="242"/>
        <end position="248"/>
    </location>
</feature>
<feature type="turn" evidence="29">
    <location>
        <begin position="249"/>
        <end position="251"/>
    </location>
</feature>
<feature type="strand" evidence="29">
    <location>
        <begin position="253"/>
        <end position="259"/>
    </location>
</feature>
<feature type="strand" evidence="29">
    <location>
        <begin position="263"/>
        <end position="268"/>
    </location>
</feature>
<feature type="turn" evidence="30">
    <location>
        <begin position="270"/>
        <end position="272"/>
    </location>
</feature>
<feature type="strand" evidence="29">
    <location>
        <begin position="275"/>
        <end position="287"/>
    </location>
</feature>
<feature type="strand" evidence="29">
    <location>
        <begin position="296"/>
        <end position="311"/>
    </location>
</feature>
<feature type="turn" evidence="29">
    <location>
        <begin position="325"/>
        <end position="328"/>
    </location>
</feature>
<feature type="strand" evidence="29">
    <location>
        <begin position="340"/>
        <end position="342"/>
    </location>
</feature>
<feature type="helix" evidence="29">
    <location>
        <begin position="360"/>
        <end position="362"/>
    </location>
</feature>
<feature type="turn" evidence="29">
    <location>
        <begin position="363"/>
        <end position="365"/>
    </location>
</feature>
<feature type="helix" evidence="29">
    <location>
        <begin position="380"/>
        <end position="384"/>
    </location>
</feature>
<feature type="strand" evidence="29">
    <location>
        <begin position="386"/>
        <end position="389"/>
    </location>
</feature>
<feature type="strand" evidence="29">
    <location>
        <begin position="392"/>
        <end position="395"/>
    </location>
</feature>
<feature type="strand" evidence="29">
    <location>
        <begin position="397"/>
        <end position="402"/>
    </location>
</feature>
<feature type="strand" evidence="29">
    <location>
        <begin position="405"/>
        <end position="409"/>
    </location>
</feature>
<feature type="turn" evidence="29">
    <location>
        <begin position="410"/>
        <end position="413"/>
    </location>
</feature>
<feature type="helix" evidence="29">
    <location>
        <begin position="415"/>
        <end position="420"/>
    </location>
</feature>
<feature type="strand" evidence="29">
    <location>
        <begin position="423"/>
        <end position="428"/>
    </location>
</feature>
<feature type="strand" evidence="29">
    <location>
        <begin position="430"/>
        <end position="436"/>
    </location>
</feature>
<feature type="strand" evidence="29">
    <location>
        <begin position="445"/>
        <end position="451"/>
    </location>
</feature>
<feature type="strand" evidence="29">
    <location>
        <begin position="453"/>
        <end position="455"/>
    </location>
</feature>
<feature type="helix" evidence="29">
    <location>
        <begin position="461"/>
        <end position="464"/>
    </location>
</feature>
<feature type="strand" evidence="29">
    <location>
        <begin position="467"/>
        <end position="473"/>
    </location>
</feature>
<feature type="strand" evidence="29">
    <location>
        <begin position="475"/>
        <end position="477"/>
    </location>
</feature>
<feature type="strand" evidence="29">
    <location>
        <begin position="479"/>
        <end position="484"/>
    </location>
</feature>
<feature type="strand" evidence="29">
    <location>
        <begin position="489"/>
        <end position="491"/>
    </location>
</feature>
<feature type="turn" evidence="29">
    <location>
        <begin position="502"/>
        <end position="504"/>
    </location>
</feature>
<feature type="strand" evidence="29">
    <location>
        <begin position="508"/>
        <end position="515"/>
    </location>
</feature>
<feature type="strand" evidence="29">
    <location>
        <begin position="525"/>
        <end position="535"/>
    </location>
</feature>
<feature type="strand" evidence="29">
    <location>
        <begin position="540"/>
        <end position="544"/>
    </location>
</feature>
<feature type="helix" evidence="29">
    <location>
        <begin position="560"/>
        <end position="563"/>
    </location>
</feature>
<feature type="helix" evidence="30">
    <location>
        <begin position="593"/>
        <end position="595"/>
    </location>
</feature>
<feature type="helix" evidence="30">
    <location>
        <begin position="603"/>
        <end position="606"/>
    </location>
</feature>
<feature type="helix" evidence="30">
    <location>
        <begin position="619"/>
        <end position="621"/>
    </location>
</feature>
<feature type="helix" evidence="30">
    <location>
        <begin position="623"/>
        <end position="627"/>
    </location>
</feature>
<feature type="strand" evidence="30">
    <location>
        <begin position="631"/>
        <end position="641"/>
    </location>
</feature>
<feature type="strand" evidence="30">
    <location>
        <begin position="652"/>
        <end position="658"/>
    </location>
</feature>
<feature type="helix" evidence="30">
    <location>
        <begin position="665"/>
        <end position="671"/>
    </location>
</feature>
<feature type="strand" evidence="30">
    <location>
        <begin position="674"/>
        <end position="691"/>
    </location>
</feature>
<feature type="strand" evidence="30">
    <location>
        <begin position="706"/>
        <end position="712"/>
    </location>
</feature>
<feature type="helix" evidence="30">
    <location>
        <begin position="725"/>
        <end position="728"/>
    </location>
</feature>
<feature type="strand" evidence="30">
    <location>
        <begin position="730"/>
        <end position="738"/>
    </location>
</feature>
<feature type="strand" evidence="30">
    <location>
        <begin position="744"/>
        <end position="748"/>
    </location>
</feature>
<feature type="strand" evidence="30">
    <location>
        <begin position="753"/>
        <end position="760"/>
    </location>
</feature>
<feature type="strand" evidence="30">
    <location>
        <begin position="763"/>
        <end position="771"/>
    </location>
</feature>
<feature type="helix" evidence="30">
    <location>
        <begin position="777"/>
        <end position="779"/>
    </location>
</feature>
<feature type="strand" evidence="30">
    <location>
        <begin position="783"/>
        <end position="788"/>
    </location>
</feature>
<feature type="strand" evidence="30">
    <location>
        <begin position="797"/>
        <end position="815"/>
    </location>
</feature>
<feature type="strand" evidence="30">
    <location>
        <begin position="825"/>
        <end position="827"/>
    </location>
</feature>
<feature type="strand" evidence="30">
    <location>
        <begin position="835"/>
        <end position="840"/>
    </location>
</feature>
<feature type="strand" evidence="30">
    <location>
        <begin position="843"/>
        <end position="845"/>
    </location>
</feature>
<feature type="strand" evidence="35">
    <location>
        <begin position="868"/>
        <end position="876"/>
    </location>
</feature>
<feature type="helix" evidence="35">
    <location>
        <begin position="878"/>
        <end position="880"/>
    </location>
</feature>
<feature type="helix" evidence="35">
    <location>
        <begin position="883"/>
        <end position="888"/>
    </location>
</feature>
<feature type="strand" evidence="35">
    <location>
        <begin position="890"/>
        <end position="893"/>
    </location>
</feature>
<feature type="turn" evidence="35">
    <location>
        <begin position="894"/>
        <end position="897"/>
    </location>
</feature>
<feature type="strand" evidence="35">
    <location>
        <begin position="898"/>
        <end position="908"/>
    </location>
</feature>
<feature type="strand" evidence="35">
    <location>
        <begin position="918"/>
        <end position="923"/>
    </location>
</feature>
<feature type="turn" evidence="35">
    <location>
        <begin position="924"/>
        <end position="927"/>
    </location>
</feature>
<feature type="strand" evidence="35">
    <location>
        <begin position="928"/>
        <end position="933"/>
    </location>
</feature>
<feature type="strand" evidence="35">
    <location>
        <begin position="935"/>
        <end position="942"/>
    </location>
</feature>
<feature type="strand" evidence="35">
    <location>
        <begin position="950"/>
        <end position="961"/>
    </location>
</feature>
<feature type="strand" evidence="35">
    <location>
        <begin position="971"/>
        <end position="974"/>
    </location>
</feature>
<feature type="strand" evidence="35">
    <location>
        <begin position="977"/>
        <end position="986"/>
    </location>
</feature>
<feature type="strand" evidence="35">
    <location>
        <begin position="989"/>
        <end position="994"/>
    </location>
</feature>
<feature type="helix" evidence="32">
    <location>
        <begin position="1456"/>
        <end position="1466"/>
    </location>
</feature>
<feature type="helix" evidence="32">
    <location>
        <begin position="1469"/>
        <end position="1477"/>
    </location>
</feature>
<feature type="strand" evidence="32">
    <location>
        <begin position="1480"/>
        <end position="1483"/>
    </location>
</feature>
<feature type="helix" evidence="32">
    <location>
        <begin position="1486"/>
        <end position="1488"/>
    </location>
</feature>
<feature type="strand" evidence="32">
    <location>
        <begin position="1489"/>
        <end position="1494"/>
    </location>
</feature>
<feature type="helix" evidence="33">
    <location>
        <begin position="1550"/>
        <end position="1562"/>
    </location>
</feature>
<feature type="strand" evidence="33">
    <location>
        <begin position="1563"/>
        <end position="1568"/>
    </location>
</feature>
<feature type="strand" evidence="33">
    <location>
        <begin position="1571"/>
        <end position="1580"/>
    </location>
</feature>
<feature type="strand" evidence="33">
    <location>
        <begin position="1582"/>
        <end position="1586"/>
    </location>
</feature>
<feature type="helix" evidence="33">
    <location>
        <begin position="1587"/>
        <end position="1589"/>
    </location>
</feature>
<feature type="strand" evidence="33">
    <location>
        <begin position="1593"/>
        <end position="1597"/>
    </location>
</feature>
<feature type="strand" evidence="33">
    <location>
        <begin position="1600"/>
        <end position="1611"/>
    </location>
</feature>
<feature type="strand" evidence="33">
    <location>
        <begin position="1617"/>
        <end position="1625"/>
    </location>
</feature>
<feature type="helix" evidence="33">
    <location>
        <begin position="1635"/>
        <end position="1637"/>
    </location>
</feature>
<feature type="strand" evidence="33">
    <location>
        <begin position="1645"/>
        <end position="1652"/>
    </location>
</feature>
<feature type="strand" evidence="33">
    <location>
        <begin position="1654"/>
        <end position="1657"/>
    </location>
</feature>
<feature type="strand" evidence="33">
    <location>
        <begin position="1660"/>
        <end position="1675"/>
    </location>
</feature>
<feature type="strand" evidence="33">
    <location>
        <begin position="1678"/>
        <end position="1688"/>
    </location>
</feature>
<feature type="helix" evidence="34">
    <location>
        <begin position="1692"/>
        <end position="1694"/>
    </location>
</feature>
<feature type="strand" evidence="33">
    <location>
        <begin position="1698"/>
        <end position="1701"/>
    </location>
</feature>
<feature type="strand" evidence="33">
    <location>
        <begin position="1704"/>
        <end position="1712"/>
    </location>
</feature>
<feature type="strand" evidence="33">
    <location>
        <begin position="1717"/>
        <end position="1721"/>
    </location>
</feature>
<feature type="helix" evidence="33">
    <location>
        <begin position="1724"/>
        <end position="1727"/>
    </location>
</feature>
<organism>
    <name type="scientific">Human enterovirus D68</name>
    <name type="common">EV68</name>
    <name type="synonym">EV-68</name>
    <dbReference type="NCBI Taxonomy" id="42789"/>
    <lineage>
        <taxon>Viruses</taxon>
        <taxon>Riboviria</taxon>
        <taxon>Orthornavirae</taxon>
        <taxon>Pisuviricota</taxon>
        <taxon>Pisoniviricetes</taxon>
        <taxon>Picornavirales</taxon>
        <taxon>Picornaviridae</taxon>
        <taxon>Ensavirinae</taxon>
        <taxon>Enterovirus</taxon>
        <taxon>Enterovirus D</taxon>
    </lineage>
</organism>
<dbReference type="EC" id="3.4.22.29" evidence="2"/>
<dbReference type="EC" id="3.6.1.15" evidence="2"/>
<dbReference type="EC" id="3.4.22.28" evidence="12"/>
<dbReference type="EC" id="2.7.7.48" evidence="10"/>
<dbReference type="EMBL" id="AY426531">
    <property type="protein sequence ID" value="AAR98503.1"/>
    <property type="molecule type" value="Genomic_RNA"/>
</dbReference>
<dbReference type="RefSeq" id="YP_009505605.1">
    <property type="nucleotide sequence ID" value="NC_038308.1"/>
</dbReference>
<dbReference type="PDB" id="4WM7">
    <property type="method" value="X-ray"/>
    <property type="resolution" value="2.32 A"/>
    <property type="chains" value="B=70-317, C=318-564"/>
</dbReference>
<dbReference type="PDB" id="4WM8">
    <property type="method" value="X-ray"/>
    <property type="resolution" value="2.00 A"/>
    <property type="chains" value="B=70-317, C=318-564"/>
</dbReference>
<dbReference type="PDB" id="5BNN">
    <property type="method" value="X-ray"/>
    <property type="resolution" value="2.32 A"/>
    <property type="chains" value="A=565-861, B=70-317, C=318-564, D=2-69"/>
</dbReference>
<dbReference type="PDB" id="5BNO">
    <property type="method" value="X-ray"/>
    <property type="resolution" value="2.15 A"/>
    <property type="chains" value="A=565-861, B=70-317, C=318-564, D=2-69"/>
</dbReference>
<dbReference type="PDB" id="5BNP">
    <property type="method" value="X-ray"/>
    <property type="resolution" value="2.15 A"/>
    <property type="chains" value="A=565-861, B=70-317, C=318-564, D=2-69"/>
</dbReference>
<dbReference type="PDB" id="6HLN">
    <property type="method" value="X-ray"/>
    <property type="resolution" value="2.10 A"/>
    <property type="chains" value="B=1438-1497"/>
</dbReference>
<dbReference type="PDB" id="6HMV">
    <property type="method" value="X-ray"/>
    <property type="resolution" value="2.24 A"/>
    <property type="chains" value="B=1453-1497"/>
</dbReference>
<dbReference type="PDB" id="7GNV">
    <property type="method" value="X-ray"/>
    <property type="resolution" value="1.42 A"/>
    <property type="chains" value="A/B=1548-1729"/>
</dbReference>
<dbReference type="PDB" id="7GNW">
    <property type="method" value="X-ray"/>
    <property type="resolution" value="1.44 A"/>
    <property type="chains" value="A/B=1548-1729"/>
</dbReference>
<dbReference type="PDB" id="7GNX">
    <property type="method" value="X-ray"/>
    <property type="resolution" value="1.48 A"/>
    <property type="chains" value="A/B=1548-1729"/>
</dbReference>
<dbReference type="PDB" id="7GNY">
    <property type="method" value="X-ray"/>
    <property type="resolution" value="1.45 A"/>
    <property type="chains" value="A/B=1548-1729"/>
</dbReference>
<dbReference type="PDB" id="7GNZ">
    <property type="method" value="X-ray"/>
    <property type="resolution" value="1.61 A"/>
    <property type="chains" value="A/B=1548-1729"/>
</dbReference>
<dbReference type="PDB" id="7GO0">
    <property type="method" value="X-ray"/>
    <property type="resolution" value="1.55 A"/>
    <property type="chains" value="A/B=1548-1729"/>
</dbReference>
<dbReference type="PDB" id="7GO1">
    <property type="method" value="X-ray"/>
    <property type="resolution" value="1.68 A"/>
    <property type="chains" value="A/B=1548-1729"/>
</dbReference>
<dbReference type="PDB" id="7GO2">
    <property type="method" value="X-ray"/>
    <property type="resolution" value="1.34 A"/>
    <property type="chains" value="A/B=1548-1729"/>
</dbReference>
<dbReference type="PDB" id="7GO3">
    <property type="method" value="X-ray"/>
    <property type="resolution" value="1.53 A"/>
    <property type="chains" value="A/B=1548-1729"/>
</dbReference>
<dbReference type="PDB" id="7GO4">
    <property type="method" value="X-ray"/>
    <property type="resolution" value="1.49 A"/>
    <property type="chains" value="A/B=1548-1729"/>
</dbReference>
<dbReference type="PDB" id="7GO5">
    <property type="method" value="X-ray"/>
    <property type="resolution" value="1.50 A"/>
    <property type="chains" value="A/B=1548-1729"/>
</dbReference>
<dbReference type="PDB" id="7GO6">
    <property type="method" value="X-ray"/>
    <property type="resolution" value="1.41 A"/>
    <property type="chains" value="A/B=1548-1729"/>
</dbReference>
<dbReference type="PDB" id="7GO7">
    <property type="method" value="X-ray"/>
    <property type="resolution" value="1.42 A"/>
    <property type="chains" value="A/B=1548-1729"/>
</dbReference>
<dbReference type="PDB" id="7GO8">
    <property type="method" value="X-ray"/>
    <property type="resolution" value="1.42 A"/>
    <property type="chains" value="A/B=1548-1729"/>
</dbReference>
<dbReference type="PDB" id="7GO9">
    <property type="method" value="X-ray"/>
    <property type="resolution" value="1.47 A"/>
    <property type="chains" value="A/B=1548-1729"/>
</dbReference>
<dbReference type="PDB" id="7GOA">
    <property type="method" value="X-ray"/>
    <property type="resolution" value="1.61 A"/>
    <property type="chains" value="A/B=1548-1729"/>
</dbReference>
<dbReference type="PDB" id="7GOB">
    <property type="method" value="X-ray"/>
    <property type="resolution" value="1.45 A"/>
    <property type="chains" value="A/B=1548-1729"/>
</dbReference>
<dbReference type="PDB" id="7GOC">
    <property type="method" value="X-ray"/>
    <property type="resolution" value="1.56 A"/>
    <property type="chains" value="A/B=1548-1729"/>
</dbReference>
<dbReference type="PDB" id="7GOD">
    <property type="method" value="X-ray"/>
    <property type="resolution" value="1.47 A"/>
    <property type="chains" value="A/B=1548-1729"/>
</dbReference>
<dbReference type="PDB" id="7GOE">
    <property type="method" value="X-ray"/>
    <property type="resolution" value="1.47 A"/>
    <property type="chains" value="A/B=1548-1729"/>
</dbReference>
<dbReference type="PDB" id="7GOF">
    <property type="method" value="X-ray"/>
    <property type="resolution" value="1.50 A"/>
    <property type="chains" value="A/B=1548-1729"/>
</dbReference>
<dbReference type="PDB" id="7GOG">
    <property type="method" value="X-ray"/>
    <property type="resolution" value="1.39 A"/>
    <property type="chains" value="A/B=1548-1729"/>
</dbReference>
<dbReference type="PDB" id="7GOH">
    <property type="method" value="X-ray"/>
    <property type="resolution" value="1.52 A"/>
    <property type="chains" value="A/B=1548-1729"/>
</dbReference>
<dbReference type="PDB" id="7GOI">
    <property type="method" value="X-ray"/>
    <property type="resolution" value="1.52 A"/>
    <property type="chains" value="A/B=1548-1729"/>
</dbReference>
<dbReference type="PDB" id="7GOJ">
    <property type="method" value="X-ray"/>
    <property type="resolution" value="1.58 A"/>
    <property type="chains" value="A/B=1548-1729"/>
</dbReference>
<dbReference type="PDB" id="7GOK">
    <property type="method" value="X-ray"/>
    <property type="resolution" value="1.44 A"/>
    <property type="chains" value="A/B=1548-1729"/>
</dbReference>
<dbReference type="PDB" id="7GOL">
    <property type="method" value="X-ray"/>
    <property type="resolution" value="1.49 A"/>
    <property type="chains" value="A/B=1548-1729"/>
</dbReference>
<dbReference type="PDB" id="7GOM">
    <property type="method" value="X-ray"/>
    <property type="resolution" value="1.39 A"/>
    <property type="chains" value="A/B=1548-1729"/>
</dbReference>
<dbReference type="PDB" id="7GON">
    <property type="method" value="X-ray"/>
    <property type="resolution" value="1.39 A"/>
    <property type="chains" value="A/B=1548-1729"/>
</dbReference>
<dbReference type="PDB" id="7GOO">
    <property type="method" value="X-ray"/>
    <property type="resolution" value="1.45 A"/>
    <property type="chains" value="A/B=1548-1729"/>
</dbReference>
<dbReference type="PDB" id="7GOP">
    <property type="method" value="X-ray"/>
    <property type="resolution" value="1.67 A"/>
    <property type="chains" value="A/B=1548-1729"/>
</dbReference>
<dbReference type="PDB" id="7GOQ">
    <property type="method" value="X-ray"/>
    <property type="resolution" value="1.30 A"/>
    <property type="chains" value="A/B=1548-1729"/>
</dbReference>
<dbReference type="PDB" id="7GOR">
    <property type="method" value="X-ray"/>
    <property type="resolution" value="1.52 A"/>
    <property type="chains" value="A/B=1548-1729"/>
</dbReference>
<dbReference type="PDB" id="7GOS">
    <property type="method" value="X-ray"/>
    <property type="resolution" value="1.47 A"/>
    <property type="chains" value="A/B=1548-1729"/>
</dbReference>
<dbReference type="PDB" id="7GOT">
    <property type="method" value="X-ray"/>
    <property type="resolution" value="1.41 A"/>
    <property type="chains" value="A/B=1548-1729"/>
</dbReference>
<dbReference type="PDB" id="7GOU">
    <property type="method" value="X-ray"/>
    <property type="resolution" value="1.46 A"/>
    <property type="chains" value="A/B=1548-1729"/>
</dbReference>
<dbReference type="PDB" id="7GOV">
    <property type="method" value="X-ray"/>
    <property type="resolution" value="1.34 A"/>
    <property type="chains" value="A/B=1548-1729"/>
</dbReference>
<dbReference type="PDB" id="7GOW">
    <property type="method" value="X-ray"/>
    <property type="resolution" value="1.28 A"/>
    <property type="chains" value="A/B=1548-1729"/>
</dbReference>
<dbReference type="PDB" id="7GOX">
    <property type="method" value="X-ray"/>
    <property type="resolution" value="1.47 A"/>
    <property type="chains" value="A/B=1548-1729"/>
</dbReference>
<dbReference type="PDB" id="7GOY">
    <property type="method" value="X-ray"/>
    <property type="resolution" value="1.63 A"/>
    <property type="chains" value="A/B=1548-1729"/>
</dbReference>
<dbReference type="PDB" id="7GOZ">
    <property type="method" value="X-ray"/>
    <property type="resolution" value="1.66 A"/>
    <property type="chains" value="A/B=1548-1729"/>
</dbReference>
<dbReference type="PDB" id="7GP0">
    <property type="method" value="X-ray"/>
    <property type="resolution" value="1.47 A"/>
    <property type="chains" value="A/B=1548-1729"/>
</dbReference>
<dbReference type="PDB" id="7GP1">
    <property type="method" value="X-ray"/>
    <property type="resolution" value="1.61 A"/>
    <property type="chains" value="A/B=1548-1729"/>
</dbReference>
<dbReference type="PDB" id="7GP2">
    <property type="method" value="X-ray"/>
    <property type="resolution" value="1.31 A"/>
    <property type="chains" value="A/B=1548-1729"/>
</dbReference>
<dbReference type="PDB" id="7GP3">
    <property type="method" value="X-ray"/>
    <property type="resolution" value="1.48 A"/>
    <property type="chains" value="A/B=1548-1729"/>
</dbReference>
<dbReference type="PDB" id="7GP4">
    <property type="method" value="X-ray"/>
    <property type="resolution" value="1.51 A"/>
    <property type="chains" value="A/B=1548-1729"/>
</dbReference>
<dbReference type="PDB" id="7GP5">
    <property type="method" value="X-ray"/>
    <property type="resolution" value="1.43 A"/>
    <property type="chains" value="A/B=1548-1729"/>
</dbReference>
<dbReference type="PDB" id="7GP6">
    <property type="method" value="X-ray"/>
    <property type="resolution" value="1.73 A"/>
    <property type="chains" value="A/B=1548-1729"/>
</dbReference>
<dbReference type="PDB" id="7GP7">
    <property type="method" value="X-ray"/>
    <property type="resolution" value="1.30 A"/>
    <property type="chains" value="A/B=1548-1729"/>
</dbReference>
<dbReference type="PDB" id="7GP8">
    <property type="method" value="X-ray"/>
    <property type="resolution" value="1.35 A"/>
    <property type="chains" value="A/B=1548-1729"/>
</dbReference>
<dbReference type="PDB" id="7GP9">
    <property type="method" value="X-ray"/>
    <property type="resolution" value="1.40 A"/>
    <property type="chains" value="A/B=1548-1729"/>
</dbReference>
<dbReference type="PDB" id="7GPA">
    <property type="method" value="X-ray"/>
    <property type="resolution" value="1.25 A"/>
    <property type="chains" value="A/B=1548-1729"/>
</dbReference>
<dbReference type="PDB" id="7GPC">
    <property type="method" value="X-ray"/>
    <property type="resolution" value="1.32 A"/>
    <property type="chains" value="A/B=1548-1729"/>
</dbReference>
<dbReference type="PDB" id="7GPD">
    <property type="method" value="X-ray"/>
    <property type="resolution" value="1.40 A"/>
    <property type="chains" value="A/B=1548-1729"/>
</dbReference>
<dbReference type="PDB" id="7GPE">
    <property type="method" value="X-ray"/>
    <property type="resolution" value="1.52 A"/>
    <property type="chains" value="A/B=1548-1729"/>
</dbReference>
<dbReference type="PDB" id="7GPF">
    <property type="method" value="X-ray"/>
    <property type="resolution" value="1.28 A"/>
    <property type="chains" value="A/B=1548-1729"/>
</dbReference>
<dbReference type="PDB" id="7GPG">
    <property type="method" value="X-ray"/>
    <property type="resolution" value="1.31 A"/>
    <property type="chains" value="A/B=1548-1729"/>
</dbReference>
<dbReference type="PDB" id="7GPH">
    <property type="method" value="X-ray"/>
    <property type="resolution" value="1.44 A"/>
    <property type="chains" value="A/B=1548-1729"/>
</dbReference>
<dbReference type="PDB" id="7GPI">
    <property type="method" value="X-ray"/>
    <property type="resolution" value="1.30 A"/>
    <property type="chains" value="A/B=1548-1729"/>
</dbReference>
<dbReference type="PDB" id="7GPJ">
    <property type="method" value="X-ray"/>
    <property type="resolution" value="1.40 A"/>
    <property type="chains" value="A/B=1548-1729"/>
</dbReference>
<dbReference type="PDB" id="7GPK">
    <property type="method" value="X-ray"/>
    <property type="resolution" value="1.39 A"/>
    <property type="chains" value="A/B=1548-1729"/>
</dbReference>
<dbReference type="PDB" id="7GPL">
    <property type="method" value="X-ray"/>
    <property type="resolution" value="1.42 A"/>
    <property type="chains" value="A/B=1548-1729"/>
</dbReference>
<dbReference type="PDB" id="7GPM">
    <property type="method" value="X-ray"/>
    <property type="resolution" value="1.46 A"/>
    <property type="chains" value="A/B=1548-1729"/>
</dbReference>
<dbReference type="PDB" id="7GPN">
    <property type="method" value="X-ray"/>
    <property type="resolution" value="1.54 A"/>
    <property type="chains" value="A/B=1548-1729"/>
</dbReference>
<dbReference type="PDB" id="7GPO">
    <property type="method" value="X-ray"/>
    <property type="resolution" value="1.48 A"/>
    <property type="chains" value="A/B=1548-1729"/>
</dbReference>
<dbReference type="PDB" id="7GPP">
    <property type="method" value="X-ray"/>
    <property type="resolution" value="1.57 A"/>
    <property type="chains" value="A/B=1548-1729"/>
</dbReference>
<dbReference type="PDB" id="7GPQ">
    <property type="method" value="X-ray"/>
    <property type="resolution" value="1.37 A"/>
    <property type="chains" value="A/B=1548-1729"/>
</dbReference>
<dbReference type="PDB" id="7GPR">
    <property type="method" value="X-ray"/>
    <property type="resolution" value="1.65 A"/>
    <property type="chains" value="A/B=1548-1729"/>
</dbReference>
<dbReference type="PDB" id="7GPS">
    <property type="method" value="X-ray"/>
    <property type="resolution" value="1.48 A"/>
    <property type="chains" value="A/B=1548-1729"/>
</dbReference>
<dbReference type="PDB" id="7GPT">
    <property type="method" value="X-ray"/>
    <property type="resolution" value="1.36 A"/>
    <property type="chains" value="A/B=1548-1729"/>
</dbReference>
<dbReference type="PDB" id="7GPU">
    <property type="method" value="X-ray"/>
    <property type="resolution" value="1.42 A"/>
    <property type="chains" value="A/B=1548-1729"/>
</dbReference>
<dbReference type="PDB" id="7GPV">
    <property type="method" value="X-ray"/>
    <property type="resolution" value="1.23 A"/>
    <property type="chains" value="A/B=1548-1729"/>
</dbReference>
<dbReference type="PDB" id="7GPW">
    <property type="method" value="X-ray"/>
    <property type="resolution" value="1.42 A"/>
    <property type="chains" value="A/B=1548-1729"/>
</dbReference>
<dbReference type="PDB" id="7GPX">
    <property type="method" value="X-ray"/>
    <property type="resolution" value="1.20 A"/>
    <property type="chains" value="A/B=1548-1729"/>
</dbReference>
<dbReference type="PDB" id="7GPY">
    <property type="method" value="X-ray"/>
    <property type="resolution" value="1.50 A"/>
    <property type="chains" value="A/B=1548-1729"/>
</dbReference>
<dbReference type="PDB" id="7GPZ">
    <property type="method" value="X-ray"/>
    <property type="resolution" value="1.71 A"/>
    <property type="chains" value="A/B=1548-1729"/>
</dbReference>
<dbReference type="PDB" id="7GQ0">
    <property type="method" value="X-ray"/>
    <property type="resolution" value="1.51 A"/>
    <property type="chains" value="A/B=1548-1729"/>
</dbReference>
<dbReference type="PDB" id="7GQ1">
    <property type="method" value="X-ray"/>
    <property type="resolution" value="1.32 A"/>
    <property type="chains" value="A/B=1548-1729"/>
</dbReference>
<dbReference type="PDB" id="7GQ2">
    <property type="method" value="X-ray"/>
    <property type="resolution" value="1.35 A"/>
    <property type="chains" value="A/B=1548-1729"/>
</dbReference>
<dbReference type="PDB" id="7GQ3">
    <property type="method" value="X-ray"/>
    <property type="resolution" value="1.42 A"/>
    <property type="chains" value="A/B=1548-1729"/>
</dbReference>
<dbReference type="PDB" id="7GQ4">
    <property type="method" value="X-ray"/>
    <property type="resolution" value="1.37 A"/>
    <property type="chains" value="A/B=1548-1729"/>
</dbReference>
<dbReference type="PDB" id="7GQ5">
    <property type="method" value="X-ray"/>
    <property type="resolution" value="1.43 A"/>
    <property type="chains" value="A/B=1548-1729"/>
</dbReference>
<dbReference type="PDB" id="7GQ6">
    <property type="method" value="X-ray"/>
    <property type="resolution" value="1.44 A"/>
    <property type="chains" value="A/B=1548-1729"/>
</dbReference>
<dbReference type="PDB" id="7GQ7">
    <property type="method" value="X-ray"/>
    <property type="resolution" value="1.28 A"/>
    <property type="chains" value="A/B=1548-1729"/>
</dbReference>
<dbReference type="PDB" id="7GQ8">
    <property type="method" value="X-ray"/>
    <property type="resolution" value="1.38 A"/>
    <property type="chains" value="A/B=1548-1729"/>
</dbReference>
<dbReference type="PDB" id="7GQ9">
    <property type="method" value="X-ray"/>
    <property type="resolution" value="1.37 A"/>
    <property type="chains" value="A/B=1548-1729"/>
</dbReference>
<dbReference type="PDB" id="7GQA">
    <property type="method" value="X-ray"/>
    <property type="resolution" value="1.66 A"/>
    <property type="chains" value="A/B=1548-1729"/>
</dbReference>
<dbReference type="PDB" id="7GQB">
    <property type="method" value="X-ray"/>
    <property type="resolution" value="1.35 A"/>
    <property type="chains" value="A/B=1548-1729"/>
</dbReference>
<dbReference type="PDB" id="7GQC">
    <property type="method" value="X-ray"/>
    <property type="resolution" value="1.36 A"/>
    <property type="chains" value="A/B=1548-1729"/>
</dbReference>
<dbReference type="PDB" id="7GQD">
    <property type="method" value="X-ray"/>
    <property type="resolution" value="1.41 A"/>
    <property type="chains" value="A/B=1548-1729"/>
</dbReference>
<dbReference type="PDB" id="7GQE">
    <property type="method" value="X-ray"/>
    <property type="resolution" value="1.44 A"/>
    <property type="chains" value="A/B=1548-1729"/>
</dbReference>
<dbReference type="PDB" id="7GQF">
    <property type="method" value="X-ray"/>
    <property type="resolution" value="1.34 A"/>
    <property type="chains" value="A/B=1548-1729"/>
</dbReference>
<dbReference type="PDB" id="7GQG">
    <property type="method" value="X-ray"/>
    <property type="resolution" value="1.30 A"/>
    <property type="chains" value="A/B=1548-1729"/>
</dbReference>
<dbReference type="PDB" id="7GQH">
    <property type="method" value="X-ray"/>
    <property type="resolution" value="1.41 A"/>
    <property type="chains" value="A/B=1548-1729"/>
</dbReference>
<dbReference type="PDB" id="7GQI">
    <property type="method" value="X-ray"/>
    <property type="resolution" value="1.49 A"/>
    <property type="chains" value="A/B=1548-1729"/>
</dbReference>
<dbReference type="PDB" id="7GQJ">
    <property type="method" value="X-ray"/>
    <property type="resolution" value="1.41 A"/>
    <property type="chains" value="A/B=1548-1729"/>
</dbReference>
<dbReference type="PDB" id="7GQK">
    <property type="method" value="X-ray"/>
    <property type="resolution" value="1.41 A"/>
    <property type="chains" value="A/B=1548-1729"/>
</dbReference>
<dbReference type="PDB" id="7GQL">
    <property type="method" value="X-ray"/>
    <property type="resolution" value="1.48 A"/>
    <property type="chains" value="A/B=1548-1729"/>
</dbReference>
<dbReference type="PDB" id="7GQM">
    <property type="method" value="X-ray"/>
    <property type="resolution" value="1.39 A"/>
    <property type="chains" value="A/B=1548-1729"/>
</dbReference>
<dbReference type="PDB" id="7GQN">
    <property type="method" value="X-ray"/>
    <property type="resolution" value="1.44 A"/>
    <property type="chains" value="A/B=1548-1729"/>
</dbReference>
<dbReference type="PDB" id="7GQO">
    <property type="method" value="X-ray"/>
    <property type="resolution" value="1.58 A"/>
    <property type="chains" value="A/B=1548-1729"/>
</dbReference>
<dbReference type="PDB" id="7GQP">
    <property type="method" value="X-ray"/>
    <property type="resolution" value="1.70 A"/>
    <property type="chains" value="A/B=1548-1729"/>
</dbReference>
<dbReference type="PDB" id="7GQQ">
    <property type="method" value="X-ray"/>
    <property type="resolution" value="1.44 A"/>
    <property type="chains" value="A/B=1548-1729"/>
</dbReference>
<dbReference type="PDB" id="7GQR">
    <property type="method" value="X-ray"/>
    <property type="resolution" value="1.35 A"/>
    <property type="chains" value="A/B=1548-1729"/>
</dbReference>
<dbReference type="PDB" id="7JRE">
    <property type="method" value="X-ray"/>
    <property type="resolution" value="2.50 A"/>
    <property type="chains" value="A/B/C/D/E/F=862-1008"/>
</dbReference>
<dbReference type="PDB" id="8CNX">
    <property type="method" value="X-ray"/>
    <property type="resolution" value="1.49 A"/>
    <property type="chains" value="A/B=1548-1731"/>
</dbReference>
<dbReference type="PDBsum" id="4WM7"/>
<dbReference type="PDBsum" id="4WM8"/>
<dbReference type="PDBsum" id="5BNN"/>
<dbReference type="PDBsum" id="5BNO"/>
<dbReference type="PDBsum" id="5BNP"/>
<dbReference type="PDBsum" id="6HLN"/>
<dbReference type="PDBsum" id="6HMV"/>
<dbReference type="PDBsum" id="7GNV"/>
<dbReference type="PDBsum" id="7GNW"/>
<dbReference type="PDBsum" id="7GNX"/>
<dbReference type="PDBsum" id="7GNY"/>
<dbReference type="PDBsum" id="7GNZ"/>
<dbReference type="PDBsum" id="7GO0"/>
<dbReference type="PDBsum" id="7GO1"/>
<dbReference type="PDBsum" id="7GO2"/>
<dbReference type="PDBsum" id="7GO3"/>
<dbReference type="PDBsum" id="7GO4"/>
<dbReference type="PDBsum" id="7GO5"/>
<dbReference type="PDBsum" id="7GO6"/>
<dbReference type="PDBsum" id="7GO7"/>
<dbReference type="PDBsum" id="7GO8"/>
<dbReference type="PDBsum" id="7GO9"/>
<dbReference type="PDBsum" id="7GOA"/>
<dbReference type="PDBsum" id="7GOB"/>
<dbReference type="PDBsum" id="7GOC"/>
<dbReference type="PDBsum" id="7GOD"/>
<dbReference type="PDBsum" id="7GOE"/>
<dbReference type="PDBsum" id="7GOF"/>
<dbReference type="PDBsum" id="7GOG"/>
<dbReference type="PDBsum" id="7GOH"/>
<dbReference type="PDBsum" id="7GOI"/>
<dbReference type="PDBsum" id="7GOJ"/>
<dbReference type="PDBsum" id="7GOK"/>
<dbReference type="PDBsum" id="7GOL"/>
<dbReference type="PDBsum" id="7GOM"/>
<dbReference type="PDBsum" id="7GON"/>
<dbReference type="PDBsum" id="7GOO"/>
<dbReference type="PDBsum" id="7GOP"/>
<dbReference type="PDBsum" id="7GOQ"/>
<dbReference type="PDBsum" id="7GOR"/>
<dbReference type="PDBsum" id="7GOS"/>
<dbReference type="PDBsum" id="7GOT"/>
<dbReference type="PDBsum" id="7GOU"/>
<dbReference type="PDBsum" id="7GOV"/>
<dbReference type="PDBsum" id="7GOW"/>
<dbReference type="PDBsum" id="7GOX"/>
<dbReference type="PDBsum" id="7GOY"/>
<dbReference type="PDBsum" id="7GOZ"/>
<dbReference type="PDBsum" id="7GP0"/>
<dbReference type="PDBsum" id="7GP1"/>
<dbReference type="PDBsum" id="7GP2"/>
<dbReference type="PDBsum" id="7GP3"/>
<dbReference type="PDBsum" id="7GP4"/>
<dbReference type="PDBsum" id="7GP5"/>
<dbReference type="PDBsum" id="7GP6"/>
<dbReference type="PDBsum" id="7GP7"/>
<dbReference type="PDBsum" id="7GP8"/>
<dbReference type="PDBsum" id="7GP9"/>
<dbReference type="PDBsum" id="7GPA"/>
<dbReference type="PDBsum" id="7GPC"/>
<dbReference type="PDBsum" id="7GPD"/>
<dbReference type="PDBsum" id="7GPE"/>
<dbReference type="PDBsum" id="7GPF"/>
<dbReference type="PDBsum" id="7GPG"/>
<dbReference type="PDBsum" id="7GPH"/>
<dbReference type="PDBsum" id="7GPI"/>
<dbReference type="PDBsum" id="7GPJ"/>
<dbReference type="PDBsum" id="7GPK"/>
<dbReference type="PDBsum" id="7GPL"/>
<dbReference type="PDBsum" id="7GPM"/>
<dbReference type="PDBsum" id="7GPN"/>
<dbReference type="PDBsum" id="7GPO"/>
<dbReference type="PDBsum" id="7GPP"/>
<dbReference type="PDBsum" id="7GPQ"/>
<dbReference type="PDBsum" id="7GPR"/>
<dbReference type="PDBsum" id="7GPS"/>
<dbReference type="PDBsum" id="7GPT"/>
<dbReference type="PDBsum" id="7GPU"/>
<dbReference type="PDBsum" id="7GPV"/>
<dbReference type="PDBsum" id="7GPW"/>
<dbReference type="PDBsum" id="7GPX"/>
<dbReference type="PDBsum" id="7GPY"/>
<dbReference type="PDBsum" id="7GPZ"/>
<dbReference type="PDBsum" id="7GQ0"/>
<dbReference type="PDBsum" id="7GQ1"/>
<dbReference type="PDBsum" id="7GQ2"/>
<dbReference type="PDBsum" id="7GQ3"/>
<dbReference type="PDBsum" id="7GQ4"/>
<dbReference type="PDBsum" id="7GQ5"/>
<dbReference type="PDBsum" id="7GQ6"/>
<dbReference type="PDBsum" id="7GQ7"/>
<dbReference type="PDBsum" id="7GQ8"/>
<dbReference type="PDBsum" id="7GQ9"/>
<dbReference type="PDBsum" id="7GQA"/>
<dbReference type="PDBsum" id="7GQB"/>
<dbReference type="PDBsum" id="7GQC"/>
<dbReference type="PDBsum" id="7GQD"/>
<dbReference type="PDBsum" id="7GQE"/>
<dbReference type="PDBsum" id="7GQF"/>
<dbReference type="PDBsum" id="7GQG"/>
<dbReference type="PDBsum" id="7GQH"/>
<dbReference type="PDBsum" id="7GQI"/>
<dbReference type="PDBsum" id="7GQJ"/>
<dbReference type="PDBsum" id="7GQK"/>
<dbReference type="PDBsum" id="7GQL"/>
<dbReference type="PDBsum" id="7GQM"/>
<dbReference type="PDBsum" id="7GQN"/>
<dbReference type="PDBsum" id="7GQO"/>
<dbReference type="PDBsum" id="7GQP"/>
<dbReference type="PDBsum" id="7GQQ"/>
<dbReference type="PDBsum" id="7GQR"/>
<dbReference type="PDBsum" id="7JRE"/>
<dbReference type="PDBsum" id="8CNX"/>
<dbReference type="SMR" id="Q68T42"/>
<dbReference type="MEROPS" id="C03.011"/>
<dbReference type="UniLectin" id="Q68T42"/>
<dbReference type="ABCD" id="Q68T42">
    <property type="antibodies" value="1 sequenced antibody"/>
</dbReference>
<dbReference type="GeneID" id="37616478"/>
<dbReference type="SABIO-RK" id="Q68T42"/>
<dbReference type="EvolutionaryTrace" id="Q68T42"/>
<dbReference type="Proteomes" id="UP000105171">
    <property type="component" value="Segment"/>
</dbReference>
<dbReference type="GO" id="GO:0005737">
    <property type="term" value="C:cytoplasm"/>
    <property type="evidence" value="ECO:0000305"/>
    <property type="project" value="UniProt"/>
</dbReference>
<dbReference type="GO" id="GO:0044162">
    <property type="term" value="C:host cell cytoplasmic vesicle membrane"/>
    <property type="evidence" value="ECO:0007669"/>
    <property type="project" value="UniProtKB-SubCell"/>
</dbReference>
<dbReference type="GO" id="GO:0042025">
    <property type="term" value="C:host cell nucleus"/>
    <property type="evidence" value="ECO:0007669"/>
    <property type="project" value="UniProtKB-SubCell"/>
</dbReference>
<dbReference type="GO" id="GO:0016020">
    <property type="term" value="C:membrane"/>
    <property type="evidence" value="ECO:0007669"/>
    <property type="project" value="UniProtKB-KW"/>
</dbReference>
<dbReference type="GO" id="GO:0039618">
    <property type="term" value="C:T=pseudo3 icosahedral viral capsid"/>
    <property type="evidence" value="ECO:0007669"/>
    <property type="project" value="UniProtKB-KW"/>
</dbReference>
<dbReference type="GO" id="GO:0005524">
    <property type="term" value="F:ATP binding"/>
    <property type="evidence" value="ECO:0007669"/>
    <property type="project" value="UniProtKB-KW"/>
</dbReference>
<dbReference type="GO" id="GO:0016887">
    <property type="term" value="F:ATP hydrolysis activity"/>
    <property type="evidence" value="ECO:0007669"/>
    <property type="project" value="InterPro"/>
</dbReference>
<dbReference type="GO" id="GO:0015267">
    <property type="term" value="F:channel activity"/>
    <property type="evidence" value="ECO:0007669"/>
    <property type="project" value="UniProtKB-KW"/>
</dbReference>
<dbReference type="GO" id="GO:0004197">
    <property type="term" value="F:cysteine-type endopeptidase activity"/>
    <property type="evidence" value="ECO:0007669"/>
    <property type="project" value="UniProtKB-EC"/>
</dbReference>
<dbReference type="GO" id="GO:0140311">
    <property type="term" value="F:protein sequestering activity"/>
    <property type="evidence" value="ECO:0000314"/>
    <property type="project" value="UniProt"/>
</dbReference>
<dbReference type="GO" id="GO:0003723">
    <property type="term" value="F:RNA binding"/>
    <property type="evidence" value="ECO:0007669"/>
    <property type="project" value="UniProtKB-KW"/>
</dbReference>
<dbReference type="GO" id="GO:0003724">
    <property type="term" value="F:RNA helicase activity"/>
    <property type="evidence" value="ECO:0007669"/>
    <property type="project" value="InterPro"/>
</dbReference>
<dbReference type="GO" id="GO:0003968">
    <property type="term" value="F:RNA-directed RNA polymerase activity"/>
    <property type="evidence" value="ECO:0007669"/>
    <property type="project" value="UniProtKB-KW"/>
</dbReference>
<dbReference type="GO" id="GO:0005198">
    <property type="term" value="F:structural molecule activity"/>
    <property type="evidence" value="ECO:0007669"/>
    <property type="project" value="InterPro"/>
</dbReference>
<dbReference type="GO" id="GO:0008270">
    <property type="term" value="F:zinc ion binding"/>
    <property type="evidence" value="ECO:0007669"/>
    <property type="project" value="UniProtKB-KW"/>
</dbReference>
<dbReference type="GO" id="GO:0006351">
    <property type="term" value="P:DNA-templated transcription"/>
    <property type="evidence" value="ECO:0007669"/>
    <property type="project" value="InterPro"/>
</dbReference>
<dbReference type="GO" id="GO:0075509">
    <property type="term" value="P:endocytosis involved in viral entry into host cell"/>
    <property type="evidence" value="ECO:0007669"/>
    <property type="project" value="UniProtKB-KW"/>
</dbReference>
<dbReference type="GO" id="GO:0034220">
    <property type="term" value="P:monoatomic ion transmembrane transport"/>
    <property type="evidence" value="ECO:0007669"/>
    <property type="project" value="UniProtKB-KW"/>
</dbReference>
<dbReference type="GO" id="GO:0006508">
    <property type="term" value="P:proteolysis"/>
    <property type="evidence" value="ECO:0007669"/>
    <property type="project" value="UniProtKB-KW"/>
</dbReference>
<dbReference type="GO" id="GO:0044694">
    <property type="term" value="P:symbiont genome entry into host cell via pore formation in plasma membrane"/>
    <property type="evidence" value="ECO:0007669"/>
    <property type="project" value="UniProtKB-KW"/>
</dbReference>
<dbReference type="GO" id="GO:0039520">
    <property type="term" value="P:symbiont-mediated activation of host autophagy"/>
    <property type="evidence" value="ECO:0007669"/>
    <property type="project" value="UniProtKB-KW"/>
</dbReference>
<dbReference type="GO" id="GO:0039537">
    <property type="term" value="P:symbiont-mediated suppression of cytoplasmic pattern recognition receptor signaling pathway"/>
    <property type="evidence" value="ECO:0000314"/>
    <property type="project" value="UniProt"/>
</dbReference>
<dbReference type="GO" id="GO:0039554">
    <property type="term" value="P:symbiont-mediated suppression of host cytoplasmic pattern recognition receptor signaling pathway via inhibition of MDA-5 activity"/>
    <property type="evidence" value="ECO:0007669"/>
    <property type="project" value="UniProtKB-KW"/>
</dbReference>
<dbReference type="GO" id="GO:0039522">
    <property type="term" value="P:symbiont-mediated suppression of host mRNA export from nucleus"/>
    <property type="evidence" value="ECO:0007669"/>
    <property type="project" value="UniProtKB-KW"/>
</dbReference>
<dbReference type="GO" id="GO:0085034">
    <property type="term" value="P:symbiont-mediated suppression of host NF-kappaB cascade"/>
    <property type="evidence" value="ECO:0007669"/>
    <property type="project" value="UniProtKB-KW"/>
</dbReference>
<dbReference type="GO" id="GO:0039722">
    <property type="term" value="P:symbiont-mediated suppression of host toll-like receptor signaling pathway"/>
    <property type="evidence" value="ECO:0007669"/>
    <property type="project" value="UniProtKB-KW"/>
</dbReference>
<dbReference type="GO" id="GO:0039694">
    <property type="term" value="P:viral RNA genome replication"/>
    <property type="evidence" value="ECO:0007669"/>
    <property type="project" value="InterPro"/>
</dbReference>
<dbReference type="GO" id="GO:0019062">
    <property type="term" value="P:virion attachment to host cell"/>
    <property type="evidence" value="ECO:0007669"/>
    <property type="project" value="UniProtKB-KW"/>
</dbReference>
<dbReference type="CDD" id="cd23213">
    <property type="entry name" value="Enterovirus_RdRp"/>
    <property type="match status" value="1"/>
</dbReference>
<dbReference type="CDD" id="cd00205">
    <property type="entry name" value="rhv_like"/>
    <property type="match status" value="3"/>
</dbReference>
<dbReference type="FunFam" id="1.20.960.20:FF:000001">
    <property type="entry name" value="Genome polyprotein"/>
    <property type="match status" value="1"/>
</dbReference>
<dbReference type="FunFam" id="2.40.10.10:FF:000020">
    <property type="entry name" value="Genome polyprotein"/>
    <property type="match status" value="1"/>
</dbReference>
<dbReference type="FunFam" id="2.40.10.10:FF:000022">
    <property type="entry name" value="Genome polyprotein"/>
    <property type="match status" value="1"/>
</dbReference>
<dbReference type="FunFam" id="2.60.120.20:FF:000002">
    <property type="entry name" value="Genome polyprotein"/>
    <property type="match status" value="1"/>
</dbReference>
<dbReference type="FunFam" id="4.10.880.10:FF:000002">
    <property type="entry name" value="Genome polyprotein"/>
    <property type="match status" value="1"/>
</dbReference>
<dbReference type="Gene3D" id="1.20.960.20">
    <property type="match status" value="1"/>
</dbReference>
<dbReference type="Gene3D" id="2.60.120.20">
    <property type="match status" value="3"/>
</dbReference>
<dbReference type="Gene3D" id="3.30.70.270">
    <property type="match status" value="1"/>
</dbReference>
<dbReference type="Gene3D" id="6.10.20.20">
    <property type="entry name" value="Poliovirus 3A protein-like"/>
    <property type="match status" value="1"/>
</dbReference>
<dbReference type="Gene3D" id="4.10.880.10">
    <property type="entry name" value="Poliovirus 3D polymerase Domain 1 (Nucleotidyltransferase)"/>
    <property type="match status" value="2"/>
</dbReference>
<dbReference type="Gene3D" id="2.40.10.10">
    <property type="entry name" value="Trypsin-like serine proteases"/>
    <property type="match status" value="4"/>
</dbReference>
<dbReference type="InterPro" id="IPR003593">
    <property type="entry name" value="AAA+_ATPase"/>
</dbReference>
<dbReference type="InterPro" id="IPR043502">
    <property type="entry name" value="DNA/RNA_pol_sf"/>
</dbReference>
<dbReference type="InterPro" id="IPR000605">
    <property type="entry name" value="Helicase_SF3_ssDNA/RNA_vir"/>
</dbReference>
<dbReference type="InterPro" id="IPR014759">
    <property type="entry name" value="Helicase_SF3_ssRNA_vir"/>
</dbReference>
<dbReference type="InterPro" id="IPR027417">
    <property type="entry name" value="P-loop_NTPase"/>
</dbReference>
<dbReference type="InterPro" id="IPR014838">
    <property type="entry name" value="P3A"/>
</dbReference>
<dbReference type="InterPro" id="IPR036203">
    <property type="entry name" value="P3A_soluble_dom"/>
</dbReference>
<dbReference type="InterPro" id="IPR044067">
    <property type="entry name" value="PCV_3C_PRO"/>
</dbReference>
<dbReference type="InterPro" id="IPR000081">
    <property type="entry name" value="Peptidase_C3"/>
</dbReference>
<dbReference type="InterPro" id="IPR000199">
    <property type="entry name" value="Peptidase_C3A/C3B_picornavir"/>
</dbReference>
<dbReference type="InterPro" id="IPR009003">
    <property type="entry name" value="Peptidase_S1_PA"/>
</dbReference>
<dbReference type="InterPro" id="IPR043504">
    <property type="entry name" value="Peptidase_S1_PA_chymotrypsin"/>
</dbReference>
<dbReference type="InterPro" id="IPR003138">
    <property type="entry name" value="Pico_P1A"/>
</dbReference>
<dbReference type="InterPro" id="IPR002527">
    <property type="entry name" value="Pico_P2B"/>
</dbReference>
<dbReference type="InterPro" id="IPR001676">
    <property type="entry name" value="Picornavirus_capsid"/>
</dbReference>
<dbReference type="InterPro" id="IPR043128">
    <property type="entry name" value="Rev_trsase/Diguanyl_cyclase"/>
</dbReference>
<dbReference type="InterPro" id="IPR033703">
    <property type="entry name" value="Rhv-like"/>
</dbReference>
<dbReference type="InterPro" id="IPR001205">
    <property type="entry name" value="RNA-dir_pol_C"/>
</dbReference>
<dbReference type="InterPro" id="IPR007094">
    <property type="entry name" value="RNA-dir_pol_PSvirus"/>
</dbReference>
<dbReference type="InterPro" id="IPR029053">
    <property type="entry name" value="Viral_coat"/>
</dbReference>
<dbReference type="Pfam" id="PF08727">
    <property type="entry name" value="P3A"/>
    <property type="match status" value="1"/>
</dbReference>
<dbReference type="Pfam" id="PF00548">
    <property type="entry name" value="Peptidase_C3"/>
    <property type="match status" value="1"/>
</dbReference>
<dbReference type="Pfam" id="PF02226">
    <property type="entry name" value="Pico_P1A"/>
    <property type="match status" value="1"/>
</dbReference>
<dbReference type="Pfam" id="PF00947">
    <property type="entry name" value="Pico_P2A"/>
    <property type="match status" value="1"/>
</dbReference>
<dbReference type="Pfam" id="PF01552">
    <property type="entry name" value="Pico_P2B"/>
    <property type="match status" value="1"/>
</dbReference>
<dbReference type="Pfam" id="PF00680">
    <property type="entry name" value="RdRP_1"/>
    <property type="match status" value="1"/>
</dbReference>
<dbReference type="Pfam" id="PF00073">
    <property type="entry name" value="Rhv"/>
    <property type="match status" value="2"/>
</dbReference>
<dbReference type="Pfam" id="PF22663">
    <property type="entry name" value="Rhv_5"/>
    <property type="match status" value="1"/>
</dbReference>
<dbReference type="Pfam" id="PF00910">
    <property type="entry name" value="RNA_helicase"/>
    <property type="match status" value="1"/>
</dbReference>
<dbReference type="SMART" id="SM00382">
    <property type="entry name" value="AAA"/>
    <property type="match status" value="1"/>
</dbReference>
<dbReference type="SUPFAM" id="SSF56672">
    <property type="entry name" value="DNA/RNA polymerases"/>
    <property type="match status" value="1"/>
</dbReference>
<dbReference type="SUPFAM" id="SSF52540">
    <property type="entry name" value="P-loop containing nucleoside triphosphate hydrolases"/>
    <property type="match status" value="1"/>
</dbReference>
<dbReference type="SUPFAM" id="SSF88633">
    <property type="entry name" value="Positive stranded ssRNA viruses"/>
    <property type="match status" value="2"/>
</dbReference>
<dbReference type="SUPFAM" id="SSF89043">
    <property type="entry name" value="Soluble domain of poliovirus core protein 3a"/>
    <property type="match status" value="1"/>
</dbReference>
<dbReference type="SUPFAM" id="SSF50494">
    <property type="entry name" value="Trypsin-like serine proteases"/>
    <property type="match status" value="2"/>
</dbReference>
<dbReference type="PROSITE" id="PS51874">
    <property type="entry name" value="PCV_3C_PRO"/>
    <property type="match status" value="1"/>
</dbReference>
<dbReference type="PROSITE" id="PS50507">
    <property type="entry name" value="RDRP_SSRNA_POS"/>
    <property type="match status" value="1"/>
</dbReference>
<dbReference type="PROSITE" id="PS51218">
    <property type="entry name" value="SF3_HELICASE_2"/>
    <property type="match status" value="1"/>
</dbReference>
<comment type="function">
    <molecule>Capsid protein VP0</molecule>
    <text evidence="2">Component of immature procapsids, which is cleaved into capsid proteins VP4 and VP2 after maturation (By similarity). Allows the capsid to remain inactive before the maturation step (By similarity).</text>
</comment>
<comment type="function">
    <molecule>Capsid protein VP1</molecule>
    <text evidence="2 14">Forms an icosahedral capsid of pseudo T=3 symmetry with capsid proteins VP2 and VP3 (By similarity). The capsid is 300 Angstroms in diameter, composed of 60 copies of each capsid protein and enclosing the viral positive strand RNA genome (By similarity). Capsid protein VP1 mainly forms the vertices of the capsid (By similarity). Capsid protein VP1, together with VP3, interacts with host cell sialic acids to provide virion attachment to target host cells (PubMed:26563423). This attachment induces virion internalization (PubMed:26563423). After binding to its receptor, the capsid undergoes conformational changes (By similarity). Capsid protein VP1 N-terminus (that contains an amphipathic alpha-helix) and capsid protein VP4 are externalized (By similarity). Together, they shape a pore in the host membrane through which viral genome is translocated to host cell cytoplasm (By similarity).</text>
</comment>
<comment type="function">
    <molecule>Capsid protein VP2</molecule>
    <text evidence="2">Forms an icosahedral capsid of pseudo T=3 symmetry with capsid proteins VP2 and VP3 (By similarity). The capsid is 300 Angstroms in diameter, composed of 60 copies of each capsid protein and enclosing the viral positive strand RNA genome (By similarity).</text>
</comment>
<comment type="function">
    <molecule>Capsid protein VP3</molecule>
    <text evidence="2 14 21">Forms an icosahedral capsid of pseudo T=3 symmetry with capsid proteins VP2 and VP3 (By similarity). The capsid is 300 Angstroms in diameter, composed of 60 copies of each capsid protein and enclosing the viral positive strand RNA genome (By similarity). Capsid protein VP3, together with VP1, interacts with host cell sialic acids to provide virion attachment to target host cells (PubMed:26563423). In addition, inhibits the phosphorylation and nuclear translocation of host IRF7 and thereby suppresses downstream interferon production (PubMed:37125923).</text>
</comment>
<comment type="function">
    <molecule>Capsid protein VP4</molecule>
    <text evidence="2">Lies on the inner surface of the capsid shell (By similarity). After binding to the host receptor, the capsid undergoes conformational changes (By similarity). Capsid protein VP4 is released, Capsid protein VP1 N-terminus is externalized, and together, they shape a pore in the host membrane through which the viral genome is translocated into the host cell cytoplasm (By similarity).</text>
</comment>
<comment type="function">
    <molecule>Protease 2A</molecule>
    <text evidence="2 17 19">Cysteine protease that cleaves viral polyprotein and specific host proteins (By similarity). It is responsible for the autocatalytic cleavage between the P1 and P2 regions, which is the first cleavage occurring in the polyprotein (By similarity). Also cleaves the host translation initiation factor EIF4G1, in order to shut down the capped cellular mRNA translation (By similarity). Inhibits the host nucleus-cytoplasm protein and RNA trafficking by cleaving host members of the nuclear pores (By similarity). Counteracts stress granule formation probably by antagonizing its assembly or promoting its dissassembly (PubMed:30867299). Also plays a role in the suppression of host innate immunity through cleavage of host TRAF3, a component of the signaling cascade required to produce type I interferons (PubMed:33148796).</text>
</comment>
<comment type="function">
    <molecule>Protein 2B</molecule>
    <text evidence="2">Plays an essential role in the virus replication cycle by acting as a viroporin. Creates a pore in the host endoplasmic reticulum and as a consequence releases Ca2+ in the cytoplasm of infected cell. In turn, high levels of cytoplasmic calcium may trigger membrane trafficking and transport of viral ER-associated proteins to viroplasms, sites of viral genome replication.</text>
</comment>
<comment type="function">
    <molecule>Protein 2C</molecule>
    <text evidence="2">Induces and associates with structural rearrangements of intracellular membranes. Displays RNA-binding, nucleotide binding and NTPase activities. May play a role in virion morphogenesis and viral RNA encapsidation by interacting with the capsid protein VP3.</text>
</comment>
<comment type="function">
    <molecule>Protein 3AB</molecule>
    <text evidence="2">Localizes the viral replication complex to the surface of membranous vesicles. Together with protein 3CD binds the Cis-Active RNA Element (CRE) which is involved in RNA synthesis initiation. Acts as a cofactor to stimulate the activity of 3D polymerase, maybe through a nucleid acid chaperone activity.</text>
</comment>
<comment type="function">
    <molecule>Protein 3A</molecule>
    <text evidence="2 18">Localizes the viral replication complex to the surface of membranous vesicles (By similarity). It inhibits host cell endoplasmic reticulum-to-Golgi apparatus transport and causes the disassembly of the Golgi complex, possibly through GBF1 interaction (By similarity). This would result in depletion of MHC, trail receptors and IFN receptors at the host cell surface (By similarity). Plays an essential role in viral RNA replication by recruiting ACBD3 and PI4KB at the viral replication sites, thereby allowing the formation of the rearranged membranous structures where viral replication takes place (PubMed:31381608).</text>
</comment>
<comment type="function">
    <molecule>Viral protein genome-linked</molecule>
    <text evidence="2">Acts as a primer for viral RNA replication and remains covalently bound to viral genomic RNA. VPg is uridylylated prior to priming replication into VPg-pUpU. The oriI viral genomic sequence may act as a template for this. The VPg-pUpU is then used as primer on the genomic RNA poly(A) by the RNA-dependent RNA polymerase to replicate the viral genome. During genome replication, the VPg-RNA linkage is removed by the host TDP2, thereby accelerating replication. During the late stage of the replication cycle, host TDP2 is excluded from sites of viral RNA synthesis and encapsidation, allowing for the generation of progeny virions.</text>
</comment>
<comment type="function">
    <molecule>Protein 3CD</molecule>
    <text evidence="2">Involved in the viral replication complex and viral polypeptide maturation. It exhibits protease activity with a specificity and catalytic efficiency that is different from protease 3C. Protein 3CD lacks polymerase activity. Protein 3CD binds to the 5'UTR of the viral genome.</text>
</comment>
<comment type="function">
    <molecule>Protease 3C</molecule>
    <text evidence="2 4 13 15 16 20">Major viral protease that mediates proteolytic processing of the polyprotein (By similarity). Cleaves host EIF5B, contributing to host translation shutoff (By similarity). Also cleaves host PABPC1, contributing to host translation shutoff (By similarity). Binds and inhibits host IFIH1/MDA5, thereby inhibiting the type-I IFN production and the establishment of the antiviral state (PubMed:28424289). Cleaves host MAP3K7/TAK1, resulting in inhibition of TRAF6-triggered NF-kappa-B induction (PubMed:28424289). Cleaves host TICAM1; this interaction allows the virus to disrupt host TLR3 signaling (PubMed:24672048). Cleaves host IRF7, resulting in inhibition of type-I IFN production (PubMed:26608321). Cleaves host NLRP1, triggers host N-glycine-mediated degradation of the autoinhibitory NLRP1 N-terminal fragment (PubMed:33410748).</text>
</comment>
<comment type="function">
    <molecule>RNA-directed RNA polymerase</molecule>
    <text evidence="2">Replicates the viral genomic RNA on the surface of intracellular membranes. May form linear arrays of subunits that propagate along a strong head-to-tail interaction called interface-I. Covalently attaches UMP to a tyrosine of VPg, which is used to prime RNA synthesis. The positive stranded RNA genome is first replicated at virus induced membranous vesicles, creating a dsRNA genomic replication form. This dsRNA is then used as template to synthesize positive stranded RNA genomes. ss(+)RNA genomes are either translated, replicated or encapsidated.</text>
</comment>
<comment type="catalytic activity">
    <molecule>Protein 2C</molecule>
    <reaction evidence="2">
        <text>a ribonucleoside 5'-triphosphate + H2O = a ribonucleoside 5'-diphosphate + phosphate + H(+)</text>
        <dbReference type="Rhea" id="RHEA:23680"/>
        <dbReference type="ChEBI" id="CHEBI:15377"/>
        <dbReference type="ChEBI" id="CHEBI:15378"/>
        <dbReference type="ChEBI" id="CHEBI:43474"/>
        <dbReference type="ChEBI" id="CHEBI:57930"/>
        <dbReference type="ChEBI" id="CHEBI:61557"/>
        <dbReference type="EC" id="3.6.1.15"/>
    </reaction>
</comment>
<comment type="catalytic activity">
    <molecule>Protease 2A</molecule>
    <reaction evidence="2">
        <text>Selective cleavage of Tyr-|-Gly bond in the picornavirus polyprotein.</text>
        <dbReference type="EC" id="3.4.22.29"/>
    </reaction>
</comment>
<comment type="catalytic activity">
    <molecule>RNA-directed RNA polymerase</molecule>
    <reaction evidence="10">
        <text>RNA(n) + a ribonucleoside 5'-triphosphate = RNA(n+1) + diphosphate</text>
        <dbReference type="Rhea" id="RHEA:21248"/>
        <dbReference type="Rhea" id="RHEA-COMP:14527"/>
        <dbReference type="Rhea" id="RHEA-COMP:17342"/>
        <dbReference type="ChEBI" id="CHEBI:33019"/>
        <dbReference type="ChEBI" id="CHEBI:61557"/>
        <dbReference type="ChEBI" id="CHEBI:140395"/>
        <dbReference type="EC" id="2.7.7.48"/>
    </reaction>
</comment>
<comment type="catalytic activity">
    <molecule>Protease 3C</molecule>
    <reaction evidence="12">
        <text>Selective cleavage of Gln-|-Gly bond in the poliovirus polyprotein. In other picornavirus reactions Glu may be substituted for Gln, and Ser or Thr for Gly.</text>
        <dbReference type="EC" id="3.4.22.28"/>
    </reaction>
</comment>
<comment type="cofactor">
    <molecule>RNA-directed RNA polymerase</molecule>
    <cofactor evidence="2">
        <name>Mg(2+)</name>
        <dbReference type="ChEBI" id="CHEBI:18420"/>
    </cofactor>
    <text evidence="2 5">Binds 2 magnesium ions that constitute a dinuclear catalytic metal center (By similarity). The magnesium ions are not prebound but only present for catalysis (By similarity). Requires the presence of 3CDpro or 3CPro (By similarity).</text>
</comment>
<comment type="subunit">
    <molecule>Capsid protein VP0</molecule>
    <text evidence="2">Interacts with capsid protein VP1 and capsid protein VP3 to form heterotrimeric protomers.</text>
</comment>
<comment type="subunit">
    <molecule>Capsid protein VP1</molecule>
    <text evidence="2">Interacts with capsid protein VP0, and capsid protein VP3 to form heterotrimeric protomers (By similarity). Five protomers subsequently associate to form pentamers which serve as building blocks for the capsid (By similarity). Interacts with capsid protein VP2, capsid protein VP3 and capsid protein VP4 following cleavage of capsid protein VP0 (By similarity).</text>
</comment>
<comment type="subunit">
    <molecule>Capsid protein VP2</molecule>
    <text evidence="2">Interacts with capsid protein VP1 and capsid protein VP3 in the mature capsid.</text>
</comment>
<comment type="subunit">
    <molecule>Capsid protein VP3</molecule>
    <text evidence="2 21">Interacts with capsid protein VP0 and capsid protein VP1 to form heterotrimeric protomers (By similarity). Five protomers subsequently associate to form pentamers which serve as building blocks for the capsid (By similarity). Interacts with capsid protein VP4 in the mature capsid (By similarity). Interacts with protein 2C; this interaction may be important for virion morphogenesis (By similarity). Interacts with host IRF7 (PubMed:37125923).</text>
</comment>
<comment type="subunit">
    <molecule>Capsid protein VP4</molecule>
    <text evidence="2">Interacts with capsid protein VP1 and capsid protein VP3.</text>
</comment>
<comment type="subunit">
    <molecule>Protease 2A</molecule>
    <text evidence="6">Homodimer.</text>
</comment>
<comment type="subunit">
    <molecule>Protein 2C</molecule>
    <text evidence="2">Homohexamer; forms a hexameric ring structure with 6-fold symmetry characteristic of AAA+ ATPases (By similarity). Interacts (via N-terminus) with host RTN3 (via reticulon domain); this interaction is important for viral replication (By similarity). Interacts with capsid protein VP3; this interaction may be important for virion morphogenesis (By similarity).</text>
</comment>
<comment type="subunit">
    <molecule>Protein 3AB</molecule>
    <text evidence="2">Interacts with protein 3CD.</text>
</comment>
<comment type="subunit">
    <molecule>Protein 3A</molecule>
    <text evidence="2 18">Homodimer (PubMed:31381608). Interacts with host GBF1 (By similarity). Interacts (via GOLD domain) with host ACBD3 (via GOLD domain); this interaction allows the formation of a viral protein 3A/ACBD3 heterotetramer with a 2:2 stoichiometry, which will stimulate the recruitment of host PI4KB in order to synthesize PI4P at the viral RNA replication sites (PubMed:31381608).</text>
</comment>
<comment type="subunit">
    <molecule>Viral protein genome-linked</molecule>
    <text evidence="2">Interacts with RNA-directed RNA polymerase.</text>
</comment>
<comment type="subunit">
    <molecule>Protease 3C</molecule>
    <text evidence="16">Interacts with host IFIH1/MDA5; this interaction inhibits host IFIH1.</text>
</comment>
<comment type="subunit">
    <molecule>Protein 3CD</molecule>
    <text evidence="2">Interacts with protein 3AB and with RNA-directed RNA polymerase.</text>
</comment>
<comment type="subunit">
    <molecule>RNA-directed RNA polymerase</molecule>
    <text evidence="2">Interacts with Viral protein genome-linked and with protein 3CD.</text>
</comment>
<comment type="subcellular location">
    <molecule>Capsid protein VP0</molecule>
    <subcellularLocation>
        <location>Virion</location>
    </subcellularLocation>
    <subcellularLocation>
        <location evidence="22">Host cytoplasm</location>
    </subcellularLocation>
</comment>
<comment type="subcellular location">
    <molecule>Capsid protein VP4</molecule>
    <subcellularLocation>
        <location>Virion</location>
    </subcellularLocation>
</comment>
<comment type="subcellular location">
    <molecule>Capsid protein VP2</molecule>
    <subcellularLocation>
        <location evidence="2">Virion</location>
    </subcellularLocation>
    <subcellularLocation>
        <location evidence="22">Host cytoplasm</location>
    </subcellularLocation>
</comment>
<comment type="subcellular location">
    <molecule>Capsid protein VP3</molecule>
    <subcellularLocation>
        <location evidence="2">Virion</location>
    </subcellularLocation>
    <subcellularLocation>
        <location evidence="22">Host cytoplasm</location>
    </subcellularLocation>
</comment>
<comment type="subcellular location">
    <molecule>Capsid protein VP1</molecule>
    <subcellularLocation>
        <location evidence="2">Virion</location>
    </subcellularLocation>
    <subcellularLocation>
        <location evidence="22">Host cytoplasm</location>
    </subcellularLocation>
</comment>
<comment type="subcellular location">
    <molecule>Protein 2B</molecule>
    <subcellularLocation>
        <location evidence="22">Host cytoplasmic vesicle membrane</location>
        <topology evidence="22">Peripheral membrane protein</topology>
        <orientation evidence="22">Cytoplasmic side</orientation>
    </subcellularLocation>
    <text>Probably localizes to the surface of intracellular membrane vesicles that are induced after virus infection as the site for viral RNA replication. These vesicles are derived from the endoplasmic reticulum.</text>
</comment>
<comment type="subcellular location">
    <molecule>Protein 2C</molecule>
    <subcellularLocation>
        <location evidence="22">Host cytoplasmic vesicle membrane</location>
        <topology evidence="22">Peripheral membrane protein</topology>
        <orientation evidence="22">Cytoplasmic side</orientation>
    </subcellularLocation>
    <text>Probably localizes to the surface of intracellular membrane vesicles that are induced after virus infection as the site for viral RNA replication. These vesicles are derived from the endoplasmic reticulum.</text>
</comment>
<comment type="subcellular location">
    <molecule>Protein 3A</molecule>
    <subcellularLocation>
        <location evidence="22">Host cytoplasmic vesicle membrane</location>
        <topology evidence="22">Peripheral membrane protein</topology>
        <orientation evidence="22">Cytoplasmic side</orientation>
    </subcellularLocation>
    <text>Probably localizes to the surface of intracellular membrane vesicles that are induced after virus infection as the site for viral RNA replication. These vesicles are derived from the endoplasmic reticulum.</text>
</comment>
<comment type="subcellular location">
    <molecule>Protein 3AB</molecule>
    <subcellularLocation>
        <location evidence="22">Host cytoplasmic vesicle membrane</location>
        <topology evidence="22">Peripheral membrane protein</topology>
        <orientation evidence="22">Cytoplasmic side</orientation>
    </subcellularLocation>
    <text>Probably localizes to the surface of intracellular membrane vesicles that are induced after virus infection as the site for viral RNA replication. These vesicles are derived from the endoplasmic reticulum.</text>
</comment>
<comment type="subcellular location">
    <molecule>Viral protein genome-linked</molecule>
    <subcellularLocation>
        <location evidence="2">Virion</location>
    </subcellularLocation>
    <subcellularLocation>
        <location evidence="7">Host cytoplasm</location>
    </subcellularLocation>
</comment>
<comment type="subcellular location">
    <molecule>Protease 3C</molecule>
    <subcellularLocation>
        <location>Host cytoplasm</location>
    </subcellularLocation>
</comment>
<comment type="subcellular location">
    <molecule>Protein 3CD</molecule>
    <subcellularLocation>
        <location evidence="2">Host nucleus</location>
    </subcellularLocation>
    <subcellularLocation>
        <location evidence="2">Host cytoplasm</location>
    </subcellularLocation>
    <subcellularLocation>
        <location evidence="22">Host cytoplasmic vesicle membrane</location>
        <topology evidence="22">Peripheral membrane protein</topology>
        <orientation evidence="22">Cytoplasmic side</orientation>
    </subcellularLocation>
    <text>Probably localizes to the surface of intracellular membrane vesicles that are induced after virus infection as the site for viral RNA replication. These vesicles are derived from the endoplasmic reticulum.</text>
</comment>
<comment type="subcellular location">
    <molecule>RNA-directed RNA polymerase</molecule>
    <subcellularLocation>
        <location evidence="22">Host cytoplasmic vesicle membrane</location>
        <topology evidence="22">Peripheral membrane protein</topology>
        <orientation evidence="22">Cytoplasmic side</orientation>
    </subcellularLocation>
    <text>Probably localizes to the surface of intracellular membrane vesicles that are induced after virus infection as the site for viral RNA replication. These vesicles are derived from the endoplasmic reticulum.</text>
</comment>
<comment type="domain">
    <molecule>Protein 2C</molecule>
    <text evidence="1 2">The N-terminus has membrane-binding (By similarity). The N-terminus also displays RNA-binding properties (By similarity). The N-terminus is involved in oligomerization (By similarity). The central part contains an ATPase domain and a degenerate C4-type zinc-finger with only 3 cysteines (By similarity). The C-terminus is involved in RNA-binding (By similarity). The extreme C-terminus contains a region involved in oligomerization (By similarity).</text>
</comment>
<comment type="PTM">
    <molecule>Genome polyprotein</molecule>
    <text evidence="2">Specific enzymatic cleavages in vivo by the viral proteases yield processing intermediates and the mature proteins.</text>
</comment>
<comment type="PTM">
    <molecule>Capsid protein VP0</molecule>
    <text evidence="2">Myristoylation is required for the formation of pentamers during virus assembly. Further assembly of 12 pentamers and a molecule of genomic RNA generates the provirion.</text>
</comment>
<comment type="PTM">
    <molecule>Capsid protein VP0</molecule>
    <text evidence="2">During virion maturation, immature virions are rendered infectious following cleavage of VP0 into VP4 and VP2. This maturation seems to be an autocatalytic event triggered by the presence of RNA in the capsid and it is followed by a conformational change infectious virion.</text>
</comment>
<comment type="PTM">
    <molecule>Capsid protein VP4</molecule>
    <text evidence="2">Myristoylation is required during RNA encapsidation and formation of the mature virus particle.</text>
</comment>
<comment type="PTM">
    <molecule>Viral protein genome-linked</molecule>
    <text evidence="2">VPg is uridylylated by the polymerase into VPg-pUpU. This acts as a nucleotide-peptide primer for the genomic RNA replication.</text>
</comment>
<comment type="similarity">
    <text evidence="22">Belongs to the picornaviruses polyprotein family.</text>
</comment>
<sequence length="2188" mass="243800">MGAQVTRQQTGTHENANIATNGSHITYNQINFYKDSYAASASKQDFSQDPSKFTEPVVEGLKAGAPVLKSPSAEACGYSDRVLQLKLGNSAIVTQEAANYCCAYGEWPNYLPDHEAVAIDKPTQPETSTDRFYTLRSVKWESNSTGWWWKLPDALNNIGMFGQNVQYHYLYRSGFLIHVQCNATKFHQGALLVVAIPEHQRGAHDTTTSPGFNDIMKGERGGTFNHPYVLDDGTSIACATIFPHQWINLRTNNSATIVLPWMNVAPMDFPLRHNQWTLAVIPVVPLGTRTMSSVVPITVSIAPMCCEFNGLRHAITQGVPTYLLPGSGQFLTTDDHSSAPVLPCFNPTPEMHIPGQIRNMLEMIQVESMMEINNTDGANGMERLRVDISVQADLDQLLFNIPLDIQLDGPLRNTLVGNISRYYTHWSGSLEMTFMFCGSFMATGKLILCYTPPGGSCPTTRETAMLGTHIVWDFGLQSSITLIIPWISGSHYRMFNSDAKSTNANVGYVTCFMQTNLIVPSESSDTCSLIGFIAAKDDFSLRLMRDSPDIGQSNHLHGAEAAYQVESIIKTATDTVKSEINAELGVVPSLNAVETGATSNTEPEEAIQTRTVINQHGVSETLVENFLGRAALVSKKSFEYKNHASSSAGTHKNFFKWTINTKSFVQLRRKLELFTYLRFDAEITILTTVAVNGNNDSTYMGLPDLTLQAMFVPTGALTPKEQDSFHWQSGSNASVFFKISDPPARMTIPFMCINSAYSVFYDGFAGFEKNGLYGINPADTIGNLCVRIVNEHQPVGFTVTVRVYMKPKHIKAWAPRPPRTMPYMSIANANYKGRDTAPNTLNAIIGNRASVTTMPHNIVTTGPGFGGVFVGSFKIINYHLATIEERQSAIYVDWQSDVLVTPIAAHGRHQIARCKCNTGVYYCRHRDRSYPICFEGPGIQWIEQNEYYPARYQTNVLLAAGPAEAGDCGGLLVCPHGVIGLLTAGGGGIVAFTDIRNLLWLDTDVMEQGITDYIQNLGNAFGAGFTETISNKAKEVQDMLIGESSLLEKLLKALIKIISALVIVIRNSEDLITVTATLALLGCHDSPWSYLKQKVCSYLGIPYVPRQSESWLKKFTEACNALRGLDWLSQKIDKFINWLKTKILPEAREKYEFVQRLKQLPVIEKQVSTIEHSCPTTERQQALFNNVQYYSHYCRKYAPLYAVESKRVAALEKKINNYIQFKSKSRIEPVCLIIHGSPGTGKSVASNLIARAITEKLGGDIYSLPPDPKYFDGYKQQTVVLMDDLMQNPDGNDISMFCQMVSTVDFIPPMASLEEKGTLYTSPFLIATTNAGSIHAPTVSDSKALSRRFKFDVDIEVTDSYKDSNKLDMSRAVEMCKPDNCTPTNYKRCCPLICGKAIQFRDRRTNARSTVDMLVTDIIKEYRTRNSTQDKLEALFQGPPQFKEIKISVAPDTPAPDAINDLLRSVDSQEVRDYCQKKGWIVIHPSNELVVEKHISRAFITLQAIATFVSIAGVVYVIYKLFAGIQGPYTGIPNPKPKVPSLRTAKVQGPGFDFAQAIMKKNTVIARTEKGEFTMLGVYDRVAVIPTHASVGEIIYINDVETRVLDACALRDLTDTNLEITIVKLDRNQKFRDIRHFLPRCEDDYNDAVLSVHTSKFPNMYIPVGQVTNYGFLNLGGTPTHRILMYNFPTRAGQCGGVVTTTGKVIGIHVGGNGAQGFAAMLLHSYFTDTQGEIVSNEKSGMCINAPAKTKLQPSVFHQVFEGSKEPAVLNSKDPRLKTDFEEAIFSKYTGNKIMLMDEYMEEAVDHYVGCLEPLDISVDPIPLENAMYGMEGLEALDLTTSAGFPYLLQGKKKRDIFNRQTRDTSEMTKMLEKYGVDLPFVTFVKDELRSREKVEKGKSRLIEASSLNDSVAMRVAFGNLYATFHNNPGTATGSAVGCDPDIFWSKIPILLDGEIFAFDYTGYDASLSPVWFACLKKVLIKLGYTHQTSFIDYLCHSVHLYKDRKYVINGGMPSGSSGTSIFNTMINNIIIRTLLIKVYKGIDLDQFKMIAYGDDVIASYPHKIDPGLLAEAGKHYGLVMTPADKGTSFIDTNWENVTFLKRYFRADDQYPFLIHPVMPMKEIHESIRWTKDPRNTQDHVRSLCYLAWHNGEEAYNEFCRKIRSVPVGRALTLPAYSSLRRKWLDSF</sequence>
<name>POLG_HED68</name>